<keyword id="KW-0002">3D-structure</keyword>
<keyword id="KW-0021">Allosteric enzyme</keyword>
<keyword id="KW-0025">Alternative splicing</keyword>
<keyword id="KW-0067">ATP-binding</keyword>
<keyword id="KW-0225">Disease variant</keyword>
<keyword id="KW-0324">Glycolysis</keyword>
<keyword id="KW-0360">Hereditary hemolytic anemia</keyword>
<keyword id="KW-0418">Kinase</keyword>
<keyword id="KW-0460">Magnesium</keyword>
<keyword id="KW-0464">Manganese</keyword>
<keyword id="KW-0479">Metal-binding</keyword>
<keyword id="KW-0547">Nucleotide-binding</keyword>
<keyword id="KW-0597">Phosphoprotein</keyword>
<keyword id="KW-0630">Potassium</keyword>
<keyword id="KW-1267">Proteomics identification</keyword>
<keyword id="KW-0670">Pyruvate</keyword>
<keyword id="KW-1185">Reference proteome</keyword>
<keyword id="KW-0808">Transferase</keyword>
<feature type="chain" id="PRO_0000112094" description="Pyruvate kinase PKLR">
    <location>
        <begin position="1"/>
        <end position="574"/>
    </location>
</feature>
<feature type="binding site" evidence="6 29">
    <location>
        <position position="116"/>
    </location>
    <ligand>
        <name>substrate</name>
    </ligand>
</feature>
<feature type="binding site" evidence="2">
    <location>
        <begin position="118"/>
        <end position="121"/>
    </location>
    <ligand>
        <name>ATP</name>
        <dbReference type="ChEBI" id="CHEBI:30616"/>
    </ligand>
</feature>
<feature type="binding site" evidence="6 30">
    <location>
        <position position="118"/>
    </location>
    <ligand>
        <name>K(+)</name>
        <dbReference type="ChEBI" id="CHEBI:29103"/>
    </ligand>
</feature>
<feature type="binding site" evidence="6 29">
    <location>
        <position position="120"/>
    </location>
    <ligand>
        <name>K(+)</name>
        <dbReference type="ChEBI" id="CHEBI:29103"/>
    </ligand>
</feature>
<feature type="binding site" evidence="6 30">
    <location>
        <position position="156"/>
    </location>
    <ligand>
        <name>K(+)</name>
        <dbReference type="ChEBI" id="CHEBI:29103"/>
    </ligand>
</feature>
<feature type="binding site" evidence="6 30">
    <location>
        <position position="157"/>
    </location>
    <ligand>
        <name>K(+)</name>
        <dbReference type="ChEBI" id="CHEBI:29103"/>
    </ligand>
</feature>
<feature type="binding site" evidence="2">
    <location>
        <position position="163"/>
    </location>
    <ligand>
        <name>ATP</name>
        <dbReference type="ChEBI" id="CHEBI:30616"/>
    </ligand>
</feature>
<feature type="binding site" evidence="2">
    <location>
        <position position="250"/>
    </location>
    <ligand>
        <name>ATP</name>
        <dbReference type="ChEBI" id="CHEBI:30616"/>
    </ligand>
</feature>
<feature type="binding site" evidence="6 30">
    <location>
        <position position="313"/>
    </location>
    <ligand>
        <name>substrate</name>
    </ligand>
</feature>
<feature type="binding site" evidence="6 30">
    <location>
        <position position="315"/>
    </location>
    <ligand>
        <name>Mn(2+)</name>
        <dbReference type="ChEBI" id="CHEBI:29035"/>
    </ligand>
</feature>
<feature type="binding site" evidence="6 30">
    <location>
        <position position="338"/>
    </location>
    <ligand>
        <name>substrate</name>
    </ligand>
</feature>
<feature type="binding site" evidence="6 30">
    <location>
        <position position="339"/>
    </location>
    <ligand>
        <name>Mn(2+)</name>
        <dbReference type="ChEBI" id="CHEBI:29035"/>
    </ligand>
</feature>
<feature type="binding site" evidence="6 30">
    <location>
        <position position="339"/>
    </location>
    <ligand>
        <name>substrate</name>
    </ligand>
</feature>
<feature type="binding site" evidence="6 30">
    <location>
        <position position="371"/>
    </location>
    <ligand>
        <name>substrate</name>
    </ligand>
</feature>
<feature type="binding site" evidence="6 30">
    <location>
        <begin position="475"/>
        <end position="480"/>
    </location>
    <ligand>
        <name>beta-D-fructose 1,6-bisphosphate</name>
        <dbReference type="ChEBI" id="CHEBI:32966"/>
        <note>allosteric activator</note>
    </ligand>
</feature>
<feature type="binding site" evidence="6 30">
    <location>
        <position position="525"/>
    </location>
    <ligand>
        <name>beta-D-fructose 1,6-bisphosphate</name>
        <dbReference type="ChEBI" id="CHEBI:32966"/>
        <note>allosteric activator</note>
    </ligand>
</feature>
<feature type="binding site" evidence="6 30">
    <location>
        <position position="532"/>
    </location>
    <ligand>
        <name>beta-D-fructose 1,6-bisphosphate</name>
        <dbReference type="ChEBI" id="CHEBI:32966"/>
        <note>allosteric activator</note>
    </ligand>
</feature>
<feature type="binding site" evidence="6 30">
    <location>
        <begin position="559"/>
        <end position="564"/>
    </location>
    <ligand>
        <name>beta-D-fructose 1,6-bisphosphate</name>
        <dbReference type="ChEBI" id="CHEBI:32966"/>
        <note>allosteric activator</note>
    </ligand>
</feature>
<feature type="site" description="Transition state stabilizer" evidence="1">
    <location>
        <position position="313"/>
    </location>
</feature>
<feature type="modified residue" description="Phosphoserine" evidence="31">
    <location>
        <position position="2"/>
    </location>
</feature>
<feature type="modified residue" description="Phosphoserine" evidence="31">
    <location>
        <position position="19"/>
    </location>
</feature>
<feature type="modified residue" description="Phosphoserine" evidence="31">
    <location>
        <position position="26"/>
    </location>
</feature>
<feature type="modified residue" description="Phosphoserine" evidence="32">
    <location>
        <position position="43"/>
    </location>
</feature>
<feature type="modified residue" description="Phosphoserine" evidence="32">
    <location>
        <position position="292"/>
    </location>
</feature>
<feature type="splice variant" id="VSP_002883" description="In isoform L-type." evidence="27">
    <original>MSIQENISSLQLRSWVSKSQRDLAKSILIGAPG</original>
    <variation>ME</variation>
    <location>
        <begin position="1"/>
        <end position="33"/>
    </location>
</feature>
<feature type="sequence variant" id="VAR_011435" description="In PKHYP; dbSNP:rs118204087." evidence="21">
    <original>G</original>
    <variation>E</variation>
    <location>
        <position position="37"/>
    </location>
</feature>
<feature type="sequence variant" id="VAR_058467" description="In CNSHA2; dbSNP:rs1484388413." evidence="9">
    <original>R</original>
    <variation>W</variation>
    <location>
        <position position="40"/>
    </location>
</feature>
<feature type="sequence variant" id="VAR_058468" description="In CNSHA2." evidence="9">
    <location>
        <begin position="48"/>
        <end position="53"/>
    </location>
</feature>
<feature type="sequence variant" id="VAR_058469" description="In CNSHA2." evidence="9">
    <original>L</original>
    <variation>P</variation>
    <location>
        <position position="73"/>
    </location>
</feature>
<feature type="sequence variant" id="VAR_011436" description="In CNSHA2." evidence="19">
    <original>S</original>
    <variation>P</variation>
    <location>
        <position position="80"/>
    </location>
</feature>
<feature type="sequence variant" id="VAR_011437" description="In CNSHA2." evidence="3">
    <original>R</original>
    <variation>P</variation>
    <location>
        <position position="86"/>
    </location>
</feature>
<feature type="sequence variant" id="VAR_011438" description="In CNSHA2." evidence="9">
    <original>I</original>
    <variation>N</variation>
    <location>
        <position position="90"/>
    </location>
</feature>
<feature type="sequence variant" id="VAR_011439" description="In CNSHA2; dbSNP:rs750857114." evidence="3">
    <original>G</original>
    <variation>R</variation>
    <location>
        <position position="95"/>
    </location>
</feature>
<feature type="sequence variant" id="VAR_004028" description="In CNSHA2." evidence="18">
    <original>M</original>
    <variation>T</variation>
    <location>
        <position position="107"/>
    </location>
</feature>
<feature type="sequence variant" id="VAR_011440" description="In CNSHA2; dbSNP:rs918627824." evidence="9">
    <original>G</original>
    <variation>R</variation>
    <location>
        <position position="111"/>
    </location>
</feature>
<feature type="sequence variant" id="VAR_011441" description="In CNSHA2; Val de Marne." evidence="20">
    <original>A</original>
    <variation>P</variation>
    <location>
        <position position="115"/>
    </location>
</feature>
<feature type="sequence variant" id="VAR_011442" description="In CNSHA2; Beaujon." evidence="20">
    <original>S</original>
    <variation>F</variation>
    <location>
        <position position="120"/>
    </location>
</feature>
<feature type="sequence variant" id="VAR_011443" description="In CNSHA2; Conakry; dbSNP:rs118204089." evidence="24">
    <original>S</original>
    <variation>Y</variation>
    <location>
        <position position="130"/>
    </location>
</feature>
<feature type="sequence variant" id="VAR_004029" description="In CNSHA2." evidence="19">
    <location>
        <position position="131"/>
    </location>
</feature>
<feature type="sequence variant" id="VAR_004030" description="In CNSHA2; dbSNP:rs574051756." evidence="17">
    <original>V</original>
    <variation>D</variation>
    <location>
        <position position="134"/>
    </location>
</feature>
<feature type="sequence variant" id="VAR_011474" description="In CNSHA2." evidence="4">
    <original>I</original>
    <variation>T</variation>
    <location>
        <position position="153"/>
    </location>
</feature>
<feature type="sequence variant" id="VAR_058470" description="In CNSHA2; dbSNP:rs780192373." evidence="9">
    <original>A</original>
    <variation>T</variation>
    <location>
        <position position="154"/>
    </location>
</feature>
<feature type="sequence variant" id="VAR_004031" description="In CNSHA2." evidence="17">
    <original>L</original>
    <variation>P</variation>
    <location>
        <position position="155"/>
    </location>
</feature>
<feature type="sequence variant" id="VAR_011444" description="In CNSHA2; dbSNP:rs1239029841." evidence="4">
    <original>G</original>
    <variation>V</variation>
    <location>
        <position position="159"/>
    </location>
</feature>
<feature type="sequence variant" id="VAR_004033" description="In CNSHA2; Linz; dbSNP:rs118204083." evidence="10">
    <original>R</original>
    <variation>C</variation>
    <location>
        <position position="163"/>
    </location>
</feature>
<feature type="sequence variant" id="VAR_058471" description="In CNSHA2." evidence="9">
    <original>R</original>
    <variation>L</variation>
    <location>
        <position position="163"/>
    </location>
</feature>
<feature type="sequence variant" id="VAR_058472" description="In CNSHA2." evidence="9">
    <original>G</original>
    <variation>V</variation>
    <location>
        <position position="165"/>
    </location>
</feature>
<feature type="sequence variant" id="VAR_004032" description="In CNSHA2; Sassari; dbSNP:rs757359024." evidence="23">
    <original>E</original>
    <variation>Q</variation>
    <location>
        <position position="172"/>
    </location>
</feature>
<feature type="sequence variant" id="VAR_011475" description="In CNSHA2; dbSNP:rs200572803." evidence="4">
    <original>I</original>
    <variation>T</variation>
    <location>
        <position position="219"/>
    </location>
</feature>
<feature type="sequence variant" id="VAR_004034" description="In CNSHA2." evidence="19">
    <original>D</original>
    <variation>DD</variation>
    <location>
        <position position="221"/>
    </location>
</feature>
<feature type="sequence variant" id="VAR_011445" description="In CNSHA2; Katsushika." evidence="3">
    <original>G</original>
    <variation>A</variation>
    <location>
        <position position="222"/>
    </location>
</feature>
<feature type="sequence variant" id="VAR_011447" description="In CNSHA2; dbSNP:rs1253386414." evidence="20">
    <original>G</original>
    <variation>R</variation>
    <location>
        <position position="263"/>
    </location>
</feature>
<feature type="sequence variant" id="VAR_011448" description="In CNSHA2." evidence="20">
    <original>G</original>
    <variation>W</variation>
    <location>
        <position position="263"/>
    </location>
</feature>
<feature type="sequence variant" id="VAR_058473" description="In CNSHA2; dbSNP:rs147659527." evidence="9">
    <original>L</original>
    <variation>V</variation>
    <location>
        <position position="272"/>
    </location>
</feature>
<feature type="sequence variant" id="VAR_004035" description="In CNSHA2; dbSNP:rs747549978." evidence="18">
    <original>G</original>
    <variation>R</variation>
    <location>
        <position position="275"/>
    </location>
</feature>
<feature type="sequence variant" id="VAR_004036" description="In CNSHA2." evidence="19">
    <original>D</original>
    <variation>N</variation>
    <location>
        <position position="281"/>
    </location>
</feature>
<feature type="sequence variant" id="VAR_004037" description="In CNSHA2." evidence="18">
    <original>F</original>
    <variation>V</variation>
    <location>
        <position position="287"/>
    </location>
</feature>
<feature type="sequence variant" id="VAR_011449" description="In CNSHA2; Moriguchi." evidence="3">
    <original>V</original>
    <variation>L</variation>
    <location>
        <position position="288"/>
    </location>
</feature>
<feature type="sequence variant" id="VAR_011446" description="In CNSHA2; dbSNP:rs1352610988." evidence="4">
    <original>D</original>
    <variation>N</variation>
    <location>
        <position position="293"/>
    </location>
</feature>
<feature type="sequence variant" id="VAR_011450" description="In CNSHA2; dbSNP:rs766353400." evidence="3">
    <original>A</original>
    <variation>V</variation>
    <location>
        <position position="295"/>
    </location>
</feature>
<feature type="sequence variant" id="VAR_011451" description="In CNSHA2; Dordrecht." evidence="9">
    <original>I</original>
    <variation>N</variation>
    <location>
        <position position="310"/>
    </location>
</feature>
<feature type="sequence variant" id="VAR_004038" description="In CNSHA2; Hong Kong; dbSNP:rs981505482." evidence="18">
    <original>I</original>
    <variation>T</variation>
    <location>
        <position position="314"/>
    </location>
</feature>
<feature type="sequence variant" id="VAR_011452" description="In CNSHA2." evidence="3">
    <original>E</original>
    <variation>K</variation>
    <location>
        <position position="315"/>
    </location>
</feature>
<feature type="sequence variant" id="VAR_058474" description="In CNSHA2; dbSNP:rs549295725." evidence="9">
    <original>V</original>
    <variation>L</variation>
    <location>
        <position position="320"/>
    </location>
</feature>
<feature type="sequence variant" id="VAR_004039" description="In CNSHA2; Parma; dbSNP:rs138476691." evidence="12">
    <original>D</original>
    <variation>E</variation>
    <location>
        <position position="331"/>
    </location>
</feature>
<feature type="sequence variant" id="VAR_011453" description="In CNSHA2; dbSNP:rs773893686." evidence="20">
    <original>D</original>
    <variation>N</variation>
    <location>
        <position position="331"/>
    </location>
</feature>
<feature type="sequence variant" id="VAR_004040" description="In CNSHA2; loss of catalytical activity; dbSNP:rs773626254." evidence="6 14 22">
    <original>G</original>
    <variation>S</variation>
    <location>
        <position position="332"/>
    </location>
</feature>
<feature type="sequence variant" id="VAR_011476" description="In CNSHA2." evidence="5">
    <original>V</original>
    <variation>M</variation>
    <location>
        <position position="335"/>
    </location>
</feature>
<feature type="sequence variant" id="VAR_004041" description="In CNSHA2." evidence="14">
    <original>A</original>
    <variation>S</variation>
    <location>
        <position position="336"/>
    </location>
</feature>
<feature type="sequence variant" id="VAR_004042" description="In CNSHA2." evidence="22">
    <original>R</original>
    <variation>P</variation>
    <location>
        <position position="337"/>
    </location>
</feature>
<feature type="sequence variant" id="VAR_004043" description="In CNSHA2; dbSNP:rs1167329263." evidence="23">
    <original>R</original>
    <variation>Q</variation>
    <location>
        <position position="337"/>
    </location>
</feature>
<feature type="sequence variant" id="VAR_004044" description="In CNSHA2; dbSNP:rs747097960." evidence="23">
    <original>D</original>
    <variation>H</variation>
    <location>
        <position position="339"/>
    </location>
</feature>
<feature type="sequence variant" id="VAR_004045" description="In CNSHA2; dbSNP:rs1227427396." evidence="11 12">
    <original>G</original>
    <variation>A</variation>
    <location>
        <position position="341"/>
    </location>
</feature>
<feature type="sequence variant" id="VAR_011454" description="In CNSHA2." evidence="3">
    <original>G</original>
    <variation>D</variation>
    <location>
        <position position="341"/>
    </location>
</feature>
<feature type="sequence variant" id="VAR_011455" description="In CNSHA2." evidence="20">
    <original>I</original>
    <variation>F</variation>
    <location>
        <position position="342"/>
    </location>
</feature>
<feature type="sequence variant" id="VAR_011456" description="In CNSHA2; Kamata." evidence="3">
    <original>K</original>
    <variation>N</variation>
    <location>
        <position position="348"/>
    </location>
</feature>
<feature type="sequence variant" id="VAR_011457" description="In CNSHA2; Brescia." evidence="5">
    <location>
        <position position="348"/>
    </location>
</feature>
<feature type="sequence variant" id="VAR_011477" description="In CNSHA2; dbSNP:rs1240481888." evidence="4 20">
    <original>A</original>
    <variation>D</variation>
    <location>
        <position position="352"/>
    </location>
</feature>
<feature type="sequence variant" id="VAR_004046" description="In CNSHA2." evidence="14">
    <location>
        <position position="354"/>
    </location>
</feature>
<feature type="sequence variant" id="VAR_004047" description="In CNSHA2; dbSNP:rs779152555." evidence="23">
    <original>I</original>
    <variation>T</variation>
    <location>
        <position position="357"/>
    </location>
</feature>
<feature type="sequence variant" id="VAR_058475" description="In CNSHA2." evidence="9">
    <original>G</original>
    <variation>E</variation>
    <location>
        <position position="358"/>
    </location>
</feature>
<feature type="sequence variant" id="VAR_004048" description="In CNSHA2; Aomori; dbSNP:rs138871700." evidence="18">
    <original>R</original>
    <variation>C</variation>
    <location>
        <position position="359"/>
    </location>
</feature>
<feature type="sequence variant" id="VAR_004049" description="In CNSHA2; dbSNP:rs1376070580." evidence="17">
    <original>R</original>
    <variation>H</variation>
    <location>
        <position position="359"/>
    </location>
</feature>
<feature type="sequence variant" id="VAR_004050" description="In CNSHA2; dbSNP:rs765903674." evidence="14">
    <original>N</original>
    <variation>D</variation>
    <location>
        <position position="361"/>
    </location>
</feature>
<feature type="sequence variant" id="VAR_011458" description="In CNSHA2; Tjaereborg; unstability of the protein and decrease in catalytic activity; dbSNP:rs981579065." evidence="6">
    <original>G</original>
    <variation>D</variation>
    <location>
        <position position="364"/>
    </location>
</feature>
<feature type="sequence variant" id="VAR_004051" description="In CNSHA2; Osaka." evidence="15">
    <original>V</original>
    <variation>F</variation>
    <location>
        <position position="368"/>
    </location>
</feature>
<feature type="sequence variant" id="VAR_058476" description="In CNSHA2." evidence="9">
    <original>L</original>
    <variation>P</variation>
    <location>
        <position position="374"/>
    </location>
</feature>
<feature type="sequence variant" id="VAR_011459" description="In CNSHA2." evidence="3">
    <original>S</original>
    <variation>I</variation>
    <location>
        <position position="376"/>
    </location>
</feature>
<feature type="sequence variant" id="VAR_004052" description="In CNSHA2; Tokyo/Beirut; no conformational change; dbSNP:rs74315362." evidence="6 8 10">
    <original>T</original>
    <variation>M</variation>
    <location>
        <position position="384"/>
    </location>
</feature>
<feature type="sequence variant" id="VAR_011478" description="In CNSHA2." evidence="4">
    <original>R</original>
    <variation>W</variation>
    <location>
        <position position="385"/>
    </location>
</feature>
<feature type="sequence variant" id="VAR_011460" description="In CNSHA2." evidence="5">
    <original>E</original>
    <variation>G</variation>
    <location>
        <position position="387"/>
    </location>
</feature>
<feature type="sequence variant" id="VAR_011461" description="In CNSHA2; Mantova; almost complete inactivation; dbSNP:rs147034239." evidence="6">
    <original>D</original>
    <variation>N</variation>
    <location>
        <position position="390"/>
    </location>
</feature>
<feature type="sequence variant" id="VAR_004053" description="In CNSHA2; dbSNP:rs1403323591." evidence="14">
    <original>A</original>
    <variation>T</variation>
    <location>
        <position position="392"/>
    </location>
</feature>
<feature type="sequence variant" id="VAR_004054" description="In CNSHA2; dbSNP:rs1168490341." evidence="12">
    <original>N</original>
    <variation>K</variation>
    <location>
        <position position="393"/>
    </location>
</feature>
<feature type="sequence variant" id="VAR_004055" description="In CNSHA2; Paris; dbSNP:rs776594413." evidence="12">
    <original>N</original>
    <variation>S</variation>
    <location>
        <position position="393"/>
    </location>
</feature>
<feature type="sequence variant" id="VAR_011462" description="In CNSHA2; dbSNP:rs1035640530." evidence="5">
    <original>A</original>
    <variation>D</variation>
    <location>
        <position position="394"/>
    </location>
</feature>
<feature type="sequence variant" id="VAR_011463" description="In CNSHA2." evidence="5">
    <original>A</original>
    <variation>V</variation>
    <location>
        <position position="394"/>
    </location>
</feature>
<feature type="sequence variant" id="VAR_004056" description="In CNSHA2." evidence="3">
    <original>C</original>
    <variation>CS</variation>
    <location>
        <position position="401"/>
    </location>
</feature>
<feature type="sequence variant" id="VAR_011464" description="In CNSHA2; Hirosaki." evidence="3">
    <original>T</original>
    <variation>A</variation>
    <location>
        <position position="408"/>
    </location>
</feature>
<feature type="sequence variant" id="VAR_004057" description="In CNSHA2." evidence="23">
    <original>T</original>
    <variation>I</variation>
    <location>
        <position position="408"/>
    </location>
</feature>
<feature type="sequence variant" id="VAR_004058" description="In CNSHA2; Fukushima/Maebashi/Sendai; dbSNP:rs118204084." evidence="7">
    <original>Q</original>
    <variation>K</variation>
    <location>
        <position position="421"/>
    </location>
</feature>
<feature type="sequence variant" id="VAR_004059" description="In CNSHA2; Sapporo; dbSNP:rs768002493." evidence="16">
    <original>R</original>
    <variation>Q</variation>
    <location>
        <position position="426"/>
    </location>
</feature>
<feature type="sequence variant" id="VAR_004060" description="In CNSHA2; Naniwa; dbSNP:rs1023689443." evidence="18">
    <original>R</original>
    <variation>W</variation>
    <location>
        <position position="426"/>
    </location>
</feature>
<feature type="sequence variant" id="VAR_011465" description="In CNSHA2." evidence="3">
    <original>E</original>
    <variation>A</variation>
    <location>
        <position position="427"/>
    </location>
</feature>
<feature type="sequence variant" id="VAR_011466" description="In CNSHA2." evidence="20">
    <original>E</original>
    <variation>D</variation>
    <location>
        <position position="427"/>
    </location>
</feature>
<feature type="sequence variant" id="VAR_004061" description="In CNSHA2; dbSNP:rs762591322." evidence="23">
    <original>A</original>
    <variation>T</variation>
    <location>
        <position position="431"/>
    </location>
</feature>
<feature type="sequence variant" id="VAR_004062" description="In CNSHA2; dbSNP:rs755522396." evidence="12">
    <original>G</original>
    <variation>D</variation>
    <location>
        <position position="458"/>
    </location>
</feature>
<feature type="sequence variant" id="VAR_004063" description="In CNSHA2." evidence="18">
    <original>A</original>
    <variation>V</variation>
    <location>
        <position position="459"/>
    </location>
</feature>
<feature type="sequence variant" id="VAR_004064" description="In CNSHA2; dbSNP:rs752034960." evidence="12">
    <original>V</original>
    <variation>M</variation>
    <location>
        <position position="460"/>
    </location>
</feature>
<feature type="sequence variant" id="VAR_011479" description="In CNSHA2; dbSNP:rs750540943." evidence="4">
    <original>A</original>
    <variation>G</variation>
    <location>
        <position position="468"/>
    </location>
</feature>
<feature type="sequence variant" id="VAR_004065" description="In CNSHA2; Hadano." evidence="18">
    <original>A</original>
    <variation>V</variation>
    <location>
        <position position="468"/>
    </location>
</feature>
<feature type="sequence variant" id="VAR_011467" description="In CNSHA2; dbSNP:rs759466273." evidence="3">
    <original>T</original>
    <variation>A</variation>
    <location>
        <position position="477"/>
    </location>
</feature>
<feature type="sequence variant" id="VAR_011480" description="In CNSHA2; Amish; no conformational change; dbSNP:rs118204085." evidence="6 13">
    <original>R</original>
    <variation>H</variation>
    <location>
        <position position="479"/>
    </location>
</feature>
<feature type="sequence variant" id="VAR_011468" description="In CNSHA2." evidence="20">
    <original>S</original>
    <variation>F</variation>
    <location>
        <position position="485"/>
    </location>
</feature>
<feature type="sequence variant" id="VAR_004066" description="In CNSHA2; no conformational change; dbSNP:rs116100695." evidence="6 17 22 23">
    <original>R</original>
    <variation>W</variation>
    <location>
        <position position="486"/>
    </location>
</feature>
<feature type="sequence variant" id="VAR_011469" description="In CNSHA2; dbSNP:rs369183199." evidence="3">
    <original>R</original>
    <variation>Q</variation>
    <location>
        <position position="488"/>
    </location>
</feature>
<feature type="sequence variant" id="VAR_004067" description="In CNSHA2; dbSNP:rs200133000." evidence="18">
    <original>R</original>
    <variation>W</variation>
    <location>
        <position position="490"/>
    </location>
</feature>
<feature type="sequence variant" id="VAR_011470" description="In CNSHA2." evidence="20">
    <original>A</original>
    <variation>T</variation>
    <location>
        <position position="495"/>
    </location>
</feature>
<feature type="sequence variant" id="VAR_004068" description="In CNSHA2; dbSNP:rs141560532." evidence="17">
    <original>A</original>
    <variation>V</variation>
    <location>
        <position position="495"/>
    </location>
</feature>
<feature type="sequence variant" id="VAR_004069" description="In CNSHA2; dbSNP:rs551883218." evidence="22">
    <original>R</original>
    <variation>C</variation>
    <location>
        <position position="498"/>
    </location>
</feature>
<feature type="sequence variant" id="VAR_004070" description="In CNSHA2; dbSNP:rs758327704." evidence="12 14">
    <original>R</original>
    <variation>H</variation>
    <location>
        <position position="498"/>
    </location>
</feature>
<feature type="sequence variant" id="VAR_011471" description="In CNSHA2; instability of the protein; dbSNP:rs185753709." evidence="6">
    <original>R</original>
    <variation>L</variation>
    <location>
        <position position="504"/>
    </location>
</feature>
<feature type="sequence variant" id="VAR_018848" description="In dbSNP:rs8177988." evidence="26">
    <original>V</original>
    <variation>I</variation>
    <location>
        <position position="506"/>
    </location>
</feature>
<feature type="sequence variant" id="VAR_004071" description="In CNSHA2; dbSNP:rs113403872." evidence="14 17 22">
    <original>R</original>
    <variation>Q</variation>
    <location>
        <position position="510"/>
    </location>
</feature>
<feature type="sequence variant" id="VAR_011472" description="In CNSHA2." evidence="3">
    <original>G</original>
    <variation>R</variation>
    <location>
        <position position="511"/>
    </location>
</feature>
<feature type="sequence variant" id="VAR_011473" description="In CNSHA2." evidence="3">
    <original>R</original>
    <variation>C</variation>
    <location>
        <position position="531"/>
    </location>
</feature>
<feature type="sequence variant" id="VAR_004072" description="In CNSHA2; dbSNP:rs758278200." evidence="23">
    <original>R</original>
    <variation>Q</variation>
    <location>
        <position position="532"/>
    </location>
</feature>
<feature type="sequence variant" id="VAR_004073" description="In CNSHA2; Complete loss in the responsiveness to fructose 1,6-bisphosphate, FBP; dbSNP:rs201255024." evidence="6 14">
    <original>R</original>
    <variation>W</variation>
    <location>
        <position position="532"/>
    </location>
</feature>
<feature type="sequence variant" id="VAR_004074" description="In CNSHA2; dbSNP:rs370316462." evidence="18">
    <original>V</original>
    <variation>M</variation>
    <location>
        <position position="552"/>
    </location>
</feature>
<feature type="sequence variant" id="VAR_011481" description="In CNSHA2." evidence="4">
    <original>G</original>
    <variation>A</variation>
    <location>
        <position position="557"/>
    </location>
</feature>
<feature type="sequence variant" id="VAR_004075" description="In CNSHA2." evidence="18">
    <original>R</original>
    <variation>G</variation>
    <location>
        <position position="559"/>
    </location>
</feature>
<feature type="sequence variant" id="VAR_004076" description="In CNSHA2." evidence="18">
    <original>N</original>
    <variation>K</variation>
    <location>
        <position position="566"/>
    </location>
</feature>
<feature type="sequence variant" id="VAR_011482" description="In CNSHA2; dbSNP:rs61755431." evidence="11">
    <original>R</original>
    <variation>Q</variation>
    <location>
        <position position="569"/>
    </location>
</feature>
<feature type="sequence conflict" description="In Ref. 3; BAA02515." evidence="27" ref="3">
    <original>P</original>
    <variation>A</variation>
    <location>
        <position position="381"/>
    </location>
</feature>
<feature type="sequence conflict" description="In Ref. 2; AAA60104." evidence="27" ref="2">
    <original>A</original>
    <variation>R</variation>
    <location>
        <position position="423"/>
    </location>
</feature>
<feature type="turn" evidence="35">
    <location>
        <begin position="42"/>
        <end position="44"/>
    </location>
</feature>
<feature type="helix" evidence="35">
    <location>
        <begin position="45"/>
        <end position="51"/>
    </location>
</feature>
<feature type="helix" evidence="35">
    <location>
        <begin position="55"/>
        <end position="57"/>
    </location>
</feature>
<feature type="helix" evidence="35">
    <location>
        <begin position="61"/>
        <end position="64"/>
    </location>
</feature>
<feature type="helix" evidence="35">
    <location>
        <begin position="69"/>
        <end position="75"/>
    </location>
</feature>
<feature type="strand" evidence="35">
    <location>
        <begin position="88"/>
        <end position="93"/>
    </location>
</feature>
<feature type="turn" evidence="35">
    <location>
        <begin position="96"/>
        <end position="98"/>
    </location>
</feature>
<feature type="helix" evidence="35">
    <location>
        <begin position="101"/>
        <end position="110"/>
    </location>
</feature>
<feature type="strand" evidence="35">
    <location>
        <begin position="112"/>
        <end position="118"/>
    </location>
</feature>
<feature type="helix" evidence="35">
    <location>
        <begin position="124"/>
        <end position="139"/>
    </location>
</feature>
<feature type="turn" evidence="35">
    <location>
        <begin position="140"/>
        <end position="143"/>
    </location>
</feature>
<feature type="turn" evidence="35">
    <location>
        <begin position="145"/>
        <end position="147"/>
    </location>
</feature>
<feature type="strand" evidence="35">
    <location>
        <begin position="152"/>
        <end position="156"/>
    </location>
</feature>
<feature type="strand" evidence="33">
    <location>
        <begin position="162"/>
        <end position="164"/>
    </location>
</feature>
<feature type="turn" evidence="36">
    <location>
        <begin position="168"/>
        <end position="171"/>
    </location>
</feature>
<feature type="strand" evidence="33">
    <location>
        <begin position="175"/>
        <end position="177"/>
    </location>
</feature>
<feature type="strand" evidence="33">
    <location>
        <begin position="182"/>
        <end position="186"/>
    </location>
</feature>
<feature type="helix" evidence="33">
    <location>
        <begin position="189"/>
        <end position="191"/>
    </location>
</feature>
<feature type="strand" evidence="33">
    <location>
        <begin position="199"/>
        <end position="203"/>
    </location>
</feature>
<feature type="helix" evidence="33">
    <location>
        <begin position="207"/>
        <end position="210"/>
    </location>
</feature>
<feature type="strand" evidence="33">
    <location>
        <begin position="216"/>
        <end position="219"/>
    </location>
</feature>
<feature type="turn" evidence="33">
    <location>
        <begin position="220"/>
        <end position="223"/>
    </location>
</feature>
<feature type="strand" evidence="33">
    <location>
        <begin position="224"/>
        <end position="232"/>
    </location>
</feature>
<feature type="strand" evidence="33">
    <location>
        <begin position="235"/>
        <end position="242"/>
    </location>
</feature>
<feature type="strand" evidence="33">
    <location>
        <begin position="244"/>
        <end position="246"/>
    </location>
</feature>
<feature type="strand" evidence="33">
    <location>
        <begin position="251"/>
        <end position="253"/>
    </location>
</feature>
<feature type="helix" evidence="35">
    <location>
        <begin position="266"/>
        <end position="277"/>
    </location>
</feature>
<feature type="strand" evidence="35">
    <location>
        <begin position="281"/>
        <end position="285"/>
    </location>
</feature>
<feature type="helix" evidence="35">
    <location>
        <begin position="291"/>
        <end position="301"/>
    </location>
</feature>
<feature type="helix" evidence="35">
    <location>
        <begin position="303"/>
        <end position="305"/>
    </location>
</feature>
<feature type="strand" evidence="35">
    <location>
        <begin position="308"/>
        <end position="314"/>
    </location>
</feature>
<feature type="helix" evidence="35">
    <location>
        <begin position="317"/>
        <end position="321"/>
    </location>
</feature>
<feature type="helix" evidence="35">
    <location>
        <begin position="323"/>
        <end position="329"/>
    </location>
</feature>
<feature type="strand" evidence="35">
    <location>
        <begin position="330"/>
        <end position="336"/>
    </location>
</feature>
<feature type="helix" evidence="35">
    <location>
        <begin position="337"/>
        <end position="343"/>
    </location>
</feature>
<feature type="helix" evidence="35">
    <location>
        <begin position="346"/>
        <end position="348"/>
    </location>
</feature>
<feature type="helix" evidence="35">
    <location>
        <begin position="349"/>
        <end position="363"/>
    </location>
</feature>
<feature type="strand" evidence="35">
    <location>
        <begin position="367"/>
        <end position="372"/>
    </location>
</feature>
<feature type="helix" evidence="35">
    <location>
        <begin position="375"/>
        <end position="378"/>
    </location>
</feature>
<feature type="strand" evidence="34">
    <location>
        <begin position="380"/>
        <end position="382"/>
    </location>
</feature>
<feature type="helix" evidence="35">
    <location>
        <begin position="385"/>
        <end position="397"/>
    </location>
</feature>
<feature type="strand" evidence="35">
    <location>
        <begin position="400"/>
        <end position="405"/>
    </location>
</feature>
<feature type="helix" evidence="35">
    <location>
        <begin position="406"/>
        <end position="409"/>
    </location>
</feature>
<feature type="helix" evidence="35">
    <location>
        <begin position="414"/>
        <end position="430"/>
    </location>
</feature>
<feature type="helix" evidence="35">
    <location>
        <begin position="434"/>
        <end position="444"/>
    </location>
</feature>
<feature type="helix" evidence="35">
    <location>
        <begin position="451"/>
        <end position="466"/>
    </location>
</feature>
<feature type="strand" evidence="35">
    <location>
        <begin position="469"/>
        <end position="474"/>
    </location>
</feature>
<feature type="strand" evidence="35">
    <location>
        <begin position="476"/>
        <end position="478"/>
    </location>
</feature>
<feature type="helix" evidence="35">
    <location>
        <begin position="479"/>
        <end position="485"/>
    </location>
</feature>
<feature type="strand" evidence="35">
    <location>
        <begin position="490"/>
        <end position="498"/>
    </location>
</feature>
<feature type="helix" evidence="35">
    <location>
        <begin position="500"/>
        <end position="505"/>
    </location>
</feature>
<feature type="helix" evidence="35">
    <location>
        <begin position="506"/>
        <end position="508"/>
    </location>
</feature>
<feature type="strand" evidence="35">
    <location>
        <begin position="512"/>
        <end position="516"/>
    </location>
</feature>
<feature type="helix" evidence="35">
    <location>
        <begin position="525"/>
        <end position="542"/>
    </location>
</feature>
<feature type="strand" evidence="35">
    <location>
        <begin position="551"/>
        <end position="561"/>
    </location>
</feature>
<feature type="strand" evidence="35">
    <location>
        <begin position="565"/>
        <end position="572"/>
    </location>
</feature>
<sequence length="574" mass="61830">MSIQENISSLQLRSWVSKSQRDLAKSILIGAPGGPAGYLRRASVAQLTQELGTAFFQQQQLPAAMADTFLEHLCLLDIDSEPVAARSTSIIATIGPASRSVERLKEMIKAGMNIARLNFSHGSHEYHAESIANVREAVESFAGSPLSYRPVAIALDTKGPEIRTGILQGGPESEVELVKGSQVLVTVDPAFRTRGNANTVWVDYPNIVRVVPVGGRIYIDDGLISLVVQKIGPEGLVTQVENGGVLGSRKGVNLPGAQVDLPGLSEQDVRDLRFGVEHGVDIVFASFVRKASDVAAVRAALGPEGHGIKIISKIENHEGVKRFDEILEVSDGIMVARGDLGIEIPAEKVFLAQKMMIGRCNLAGKPVVCATQMLESMITKPRPTRAETSDVANAVLDGADCIMLSGETAKGNFPVEAVKMQHAIAREAEAAVYHRQLFEELRRAAPLSRDPTEVTAIGAVEAAFKCCAAAIIVLTTTGRSAQLLSRYRPRAAVIAVTRSAQAARQVHLCRGVFPLLYREPPEAIWADDVDRRVQFGIESGKLRGFLRVGDLVIVVTGWRPGSGYTNIMRVLSIS</sequence>
<evidence type="ECO:0000250" key="1">
    <source>
        <dbReference type="UniProtKB" id="P00549"/>
    </source>
</evidence>
<evidence type="ECO:0000250" key="2">
    <source>
        <dbReference type="UniProtKB" id="P14618"/>
    </source>
</evidence>
<evidence type="ECO:0000269" key="3">
    <source>
    </source>
</evidence>
<evidence type="ECO:0000269" key="4">
    <source>
    </source>
</evidence>
<evidence type="ECO:0000269" key="5">
    <source>
    </source>
</evidence>
<evidence type="ECO:0000269" key="6">
    <source>
    </source>
</evidence>
<evidence type="ECO:0000269" key="7">
    <source>
    </source>
</evidence>
<evidence type="ECO:0000269" key="8">
    <source>
    </source>
</evidence>
<evidence type="ECO:0000269" key="9">
    <source>
    </source>
</evidence>
<evidence type="ECO:0000269" key="10">
    <source>
    </source>
</evidence>
<evidence type="ECO:0000269" key="11">
    <source>
    </source>
</evidence>
<evidence type="ECO:0000269" key="12">
    <source>
    </source>
</evidence>
<evidence type="ECO:0000269" key="13">
    <source>
    </source>
</evidence>
<evidence type="ECO:0000269" key="14">
    <source>
    </source>
</evidence>
<evidence type="ECO:0000269" key="15">
    <source>
    </source>
</evidence>
<evidence type="ECO:0000269" key="16">
    <source>
    </source>
</evidence>
<evidence type="ECO:0000269" key="17">
    <source>
    </source>
</evidence>
<evidence type="ECO:0000269" key="18">
    <source>
    </source>
</evidence>
<evidence type="ECO:0000269" key="19">
    <source>
    </source>
</evidence>
<evidence type="ECO:0000269" key="20">
    <source>
    </source>
</evidence>
<evidence type="ECO:0000269" key="21">
    <source>
    </source>
</evidence>
<evidence type="ECO:0000269" key="22">
    <source>
    </source>
</evidence>
<evidence type="ECO:0000269" key="23">
    <source>
    </source>
</evidence>
<evidence type="ECO:0000269" key="24">
    <source>
    </source>
</evidence>
<evidence type="ECO:0000269" key="25">
    <source ref="24"/>
</evidence>
<evidence type="ECO:0000269" key="26">
    <source ref="5"/>
</evidence>
<evidence type="ECO:0000305" key="27"/>
<evidence type="ECO:0000305" key="28">
    <source>
    </source>
</evidence>
<evidence type="ECO:0007744" key="29">
    <source>
        <dbReference type="PDB" id="2VGB"/>
    </source>
</evidence>
<evidence type="ECO:0007744" key="30">
    <source>
        <dbReference type="PDB" id="2VGF"/>
    </source>
</evidence>
<evidence type="ECO:0007744" key="31">
    <source>
    </source>
</evidence>
<evidence type="ECO:0007744" key="32">
    <source>
    </source>
</evidence>
<evidence type="ECO:0007829" key="33">
    <source>
        <dbReference type="PDB" id="4IP7"/>
    </source>
</evidence>
<evidence type="ECO:0007829" key="34">
    <source>
        <dbReference type="PDB" id="7FRZ"/>
    </source>
</evidence>
<evidence type="ECO:0007829" key="35">
    <source>
        <dbReference type="PDB" id="7FS3"/>
    </source>
</evidence>
<evidence type="ECO:0007829" key="36">
    <source>
        <dbReference type="PDB" id="8TBT"/>
    </source>
</evidence>
<protein>
    <recommendedName>
        <fullName>Pyruvate kinase PKLR</fullName>
        <ecNumber evidence="6">2.7.1.40</ecNumber>
    </recommendedName>
    <alternativeName>
        <fullName>Pyruvate kinase 1</fullName>
    </alternativeName>
    <alternativeName>
        <fullName>Pyruvate kinase isozymes L/R</fullName>
    </alternativeName>
    <alternativeName>
        <fullName>R-type/L-type pyruvate kinase</fullName>
    </alternativeName>
    <alternativeName>
        <fullName>Red cell/liver pyruvate kinase</fullName>
    </alternativeName>
</protein>
<name>KPYR_HUMAN</name>
<dbReference type="EC" id="2.7.1.40" evidence="6"/>
<dbReference type="EMBL" id="AB015983">
    <property type="protein sequence ID" value="BAA31706.1"/>
    <property type="molecule type" value="mRNA"/>
</dbReference>
<dbReference type="EMBL" id="M15465">
    <property type="protein sequence ID" value="AAA60104.1"/>
    <property type="molecule type" value="mRNA"/>
</dbReference>
<dbReference type="EMBL" id="D13243">
    <property type="protein sequence ID" value="BAA02515.1"/>
    <property type="status" value="ALT_SEQ"/>
    <property type="molecule type" value="Genomic_DNA"/>
</dbReference>
<dbReference type="EMBL" id="AY316591">
    <property type="protein sequence ID" value="AAP69527.1"/>
    <property type="molecule type" value="Genomic_DNA"/>
</dbReference>
<dbReference type="EMBL" id="BC025737">
    <property type="protein sequence ID" value="AAH25737.1"/>
    <property type="molecule type" value="mRNA"/>
</dbReference>
<dbReference type="EMBL" id="S60712">
    <property type="protein sequence ID" value="AAB26262.1"/>
    <property type="molecule type" value="mRNA"/>
</dbReference>
<dbReference type="CCDS" id="CCDS1109.1">
    <molecule id="P30613-1"/>
</dbReference>
<dbReference type="CCDS" id="CCDS44240.1">
    <molecule id="P30613-2"/>
</dbReference>
<dbReference type="PIR" id="I52269">
    <property type="entry name" value="KIHUPR"/>
</dbReference>
<dbReference type="RefSeq" id="NP_000289.1">
    <molecule id="P30613-1"/>
    <property type="nucleotide sequence ID" value="NM_000298.6"/>
</dbReference>
<dbReference type="RefSeq" id="NP_870986.1">
    <molecule id="P30613-2"/>
    <property type="nucleotide sequence ID" value="NM_181871.4"/>
</dbReference>
<dbReference type="RefSeq" id="XP_047278547.1">
    <molecule id="P30613-1"/>
    <property type="nucleotide sequence ID" value="XM_047422591.1"/>
</dbReference>
<dbReference type="RefSeq" id="XP_047278548.1">
    <molecule id="P30613-1"/>
    <property type="nucleotide sequence ID" value="XM_047422592.1"/>
</dbReference>
<dbReference type="RefSeq" id="XP_054193047.1">
    <molecule id="P30613-1"/>
    <property type="nucleotide sequence ID" value="XM_054337072.1"/>
</dbReference>
<dbReference type="RefSeq" id="XP_054193048.1">
    <molecule id="P30613-1"/>
    <property type="nucleotide sequence ID" value="XM_054337073.1"/>
</dbReference>
<dbReference type="PDB" id="2VGB">
    <property type="method" value="X-ray"/>
    <property type="resolution" value="2.73 A"/>
    <property type="chains" value="A/B/C/D=47-574"/>
</dbReference>
<dbReference type="PDB" id="2VGF">
    <property type="method" value="X-ray"/>
    <property type="resolution" value="2.75 A"/>
    <property type="chains" value="A/B/C/D=47-574"/>
</dbReference>
<dbReference type="PDB" id="2VGG">
    <property type="method" value="X-ray"/>
    <property type="resolution" value="2.74 A"/>
    <property type="chains" value="A/B/C/D=47-574"/>
</dbReference>
<dbReference type="PDB" id="2VGI">
    <property type="method" value="X-ray"/>
    <property type="resolution" value="2.87 A"/>
    <property type="chains" value="A/B/C/D=47-574"/>
</dbReference>
<dbReference type="PDB" id="4IMA">
    <property type="method" value="X-ray"/>
    <property type="resolution" value="1.95 A"/>
    <property type="chains" value="A/B/C/D=34-574"/>
</dbReference>
<dbReference type="PDB" id="4IP7">
    <property type="method" value="X-ray"/>
    <property type="resolution" value="1.80 A"/>
    <property type="chains" value="A/B/C/D=34-574"/>
</dbReference>
<dbReference type="PDB" id="5SC8">
    <property type="method" value="X-ray"/>
    <property type="resolution" value="1.77 A"/>
    <property type="chains" value="A/B/C/D/E/F/G/H=34-160, A/B/C/D/E/F/G/H=262-574"/>
</dbReference>
<dbReference type="PDB" id="5SC9">
    <property type="method" value="X-ray"/>
    <property type="resolution" value="1.69 A"/>
    <property type="chains" value="A/B/C/D/E/F/G/H=34-160, A/B/C/D/E/F/G/H=262-574"/>
</dbReference>
<dbReference type="PDB" id="5SCA">
    <property type="method" value="X-ray"/>
    <property type="resolution" value="1.92 A"/>
    <property type="chains" value="A/B/C/D/E/F/G/H=34-160, A/B/C/D/E/F/G/H=262-574"/>
</dbReference>
<dbReference type="PDB" id="5SCB">
    <property type="method" value="X-ray"/>
    <property type="resolution" value="1.80 A"/>
    <property type="chains" value="A/B/C/D/E/F/G/H=34-160, A/B/C/D/E/F/G/H=262-574"/>
</dbReference>
<dbReference type="PDB" id="5SCC">
    <property type="method" value="X-ray"/>
    <property type="resolution" value="1.89 A"/>
    <property type="chains" value="A/B/C/D/E/F/G/H=34-160, A/B/C/D/E/F/G/H=262-574"/>
</dbReference>
<dbReference type="PDB" id="5SCD">
    <property type="method" value="X-ray"/>
    <property type="resolution" value="2.04 A"/>
    <property type="chains" value="A/B/C/D/E/F/G/H=34-160, A/B/C/D/E/F/G/H=262-574"/>
</dbReference>
<dbReference type="PDB" id="5SCE">
    <property type="method" value="X-ray"/>
    <property type="resolution" value="2.15 A"/>
    <property type="chains" value="A/B/C/D/E/F/G/H=34-160, A/B/C/D/E/F/G/H=262-574"/>
</dbReference>
<dbReference type="PDB" id="5SCF">
    <property type="method" value="X-ray"/>
    <property type="resolution" value="2.19 A"/>
    <property type="chains" value="A/B/C/D/E/F/G/H=34-160, A/B/C/D/E/F/G/H=262-574"/>
</dbReference>
<dbReference type="PDB" id="5SCG">
    <property type="method" value="X-ray"/>
    <property type="resolution" value="1.94 A"/>
    <property type="chains" value="A/B/C/D/E/F/G/H=34-160, A/B/C/D/E/F/G/H=262-574"/>
</dbReference>
<dbReference type="PDB" id="5SCH">
    <property type="method" value="X-ray"/>
    <property type="resolution" value="2.09 A"/>
    <property type="chains" value="A/B/C/D/E/F/G/H=34-160, A/B/C/D/E/F/G/H=262-574"/>
</dbReference>
<dbReference type="PDB" id="5SCI">
    <property type="method" value="X-ray"/>
    <property type="resolution" value="2.15 A"/>
    <property type="chains" value="A/B/C/D/E/F/G/H=34-160, A/B/C/D/E/F/G/H=262-574"/>
</dbReference>
<dbReference type="PDB" id="5SCJ">
    <property type="method" value="X-ray"/>
    <property type="resolution" value="2.35 A"/>
    <property type="chains" value="A/B/C/D/E/F/G/H=34-160, A/B/C/D/E/F/G/H=262-574"/>
</dbReference>
<dbReference type="PDB" id="5SCK">
    <property type="method" value="X-ray"/>
    <property type="resolution" value="1.72 A"/>
    <property type="chains" value="A/B/C/D/E/F/G/H=34-160, A/B/C/D/E/F/G/H=262-574"/>
</dbReference>
<dbReference type="PDB" id="5SCL">
    <property type="method" value="X-ray"/>
    <property type="resolution" value="2.13 A"/>
    <property type="chains" value="A/B/C/D/E/F/G/H=34-160, A/B/C/D/E/F/G/H=262-574"/>
</dbReference>
<dbReference type="PDB" id="5SDT">
    <property type="method" value="X-ray"/>
    <property type="resolution" value="1.94 A"/>
    <property type="chains" value="A/B/C/D/E/F/G/H=34-160, A/B/C/D/E/F/G/H=262-574"/>
</dbReference>
<dbReference type="PDB" id="6NN4">
    <property type="method" value="X-ray"/>
    <property type="resolution" value="2.15 A"/>
    <property type="chains" value="A/B/C/D=34-574"/>
</dbReference>
<dbReference type="PDB" id="6NN5">
    <property type="method" value="X-ray"/>
    <property type="resolution" value="2.26 A"/>
    <property type="chains" value="A/B/C/D=34-574"/>
</dbReference>
<dbReference type="PDB" id="6NN7">
    <property type="method" value="X-ray"/>
    <property type="resolution" value="2.32 A"/>
    <property type="chains" value="A/B/C/D/E/F/G/H=34-574"/>
</dbReference>
<dbReference type="PDB" id="6NN8">
    <property type="method" value="X-ray"/>
    <property type="resolution" value="2.42 A"/>
    <property type="chains" value="A/B/C/D/E/F/G/H=34-574"/>
</dbReference>
<dbReference type="PDB" id="7FRV">
    <property type="method" value="X-ray"/>
    <property type="resolution" value="2.00 A"/>
    <property type="chains" value="A/B/C/D/E/F/G/H=34-160, A/B/C/D/E/F/G/H=262-574"/>
</dbReference>
<dbReference type="PDB" id="7FRW">
    <property type="method" value="X-ray"/>
    <property type="resolution" value="1.74 A"/>
    <property type="chains" value="A/B/C/D/E/F/G/H=34-160, A/B/C/D/E/F/G/H=262-574"/>
</dbReference>
<dbReference type="PDB" id="7FRX">
    <property type="method" value="X-ray"/>
    <property type="resolution" value="1.85 A"/>
    <property type="chains" value="A/B/C/D/E/F/G/H=34-160, A/B/C/D/E/F/G/H=262-574"/>
</dbReference>
<dbReference type="PDB" id="7FRY">
    <property type="method" value="X-ray"/>
    <property type="resolution" value="1.96 A"/>
    <property type="chains" value="A/B/C/D/E/F/G/H=34-160, A/B/C/D/E/F/G/H=262-574"/>
</dbReference>
<dbReference type="PDB" id="7FRZ">
    <property type="method" value="X-ray"/>
    <property type="resolution" value="2.08 A"/>
    <property type="chains" value="A/B/C/D/E/F/G/H=34-160, A/B/C/D/E/F/G/H=262-574"/>
</dbReference>
<dbReference type="PDB" id="7FS0">
    <property type="method" value="X-ray"/>
    <property type="resolution" value="2.41 A"/>
    <property type="chains" value="A/B/C/D/E/F/G/H=34-160, A/B/C/D/E/F/G/H=262-574"/>
</dbReference>
<dbReference type="PDB" id="7FS1">
    <property type="method" value="X-ray"/>
    <property type="resolution" value="1.86 A"/>
    <property type="chains" value="A/B/C/D/E/F/G/H=34-160, A/B/C/D/E/F/G/H=262-574"/>
</dbReference>
<dbReference type="PDB" id="7FS2">
    <property type="method" value="X-ray"/>
    <property type="resolution" value="2.37 A"/>
    <property type="chains" value="A/B/C/D/E/F/G/H=34-160, A/B/C/D/E/F/G/H=262-574"/>
</dbReference>
<dbReference type="PDB" id="7FS3">
    <property type="method" value="X-ray"/>
    <property type="resolution" value="1.66 A"/>
    <property type="chains" value="A/B/C/D/E/F/G/H=34-160, A/B/C/D/E/F/G/H=262-574"/>
</dbReference>
<dbReference type="PDB" id="7FS4">
    <property type="method" value="X-ray"/>
    <property type="resolution" value="2.19 A"/>
    <property type="chains" value="A/B/C/D/E/F/G/H=34-160, A/B/C/D/E/F/G/H=262-574"/>
</dbReference>
<dbReference type="PDB" id="7FS5">
    <property type="method" value="X-ray"/>
    <property type="resolution" value="2.18 A"/>
    <property type="chains" value="A/B/C/D/E/F/G/H=34-160, A/B/C/D/E/F/G/H=262-574"/>
</dbReference>
<dbReference type="PDB" id="7FS6">
    <property type="method" value="X-ray"/>
    <property type="resolution" value="2.24 A"/>
    <property type="chains" value="A/B/C/D/E/F/G/H=34-160, A/B/C/D/E/F/G/H=262-574"/>
</dbReference>
<dbReference type="PDB" id="7FS7">
    <property type="method" value="X-ray"/>
    <property type="resolution" value="2.77 A"/>
    <property type="chains" value="A/B/C/D/E/F/G/H=34-160, A/B/C/D/E/F/G/H=262-574"/>
</dbReference>
<dbReference type="PDB" id="7FS8">
    <property type="method" value="X-ray"/>
    <property type="resolution" value="2.10 A"/>
    <property type="chains" value="A/B/C/D/E/F/G/H=34-160, A/B/C/D/E/F/G/H=262-574"/>
</dbReference>
<dbReference type="PDB" id="7FS9">
    <property type="method" value="X-ray"/>
    <property type="resolution" value="1.72 A"/>
    <property type="chains" value="A/B/C/D/E/F/G/H=34-160, A/B/C/D/E/F/G/H=262-574"/>
</dbReference>
<dbReference type="PDB" id="7FSA">
    <property type="method" value="X-ray"/>
    <property type="resolution" value="1.91 A"/>
    <property type="chains" value="A/B/C/D/E/F/G/H=34-160, A/B/C/D/E/F/G/H=262-574"/>
</dbReference>
<dbReference type="PDB" id="7FSB">
    <property type="method" value="X-ray"/>
    <property type="resolution" value="2.50 A"/>
    <property type="chains" value="A/B/C/D/E/F/G/H=34-160, A/B/C/D/E/F/G/H=262-574"/>
</dbReference>
<dbReference type="PDB" id="7FSC">
    <property type="method" value="X-ray"/>
    <property type="resolution" value="1.85 A"/>
    <property type="chains" value="A/B/C/D/E/F/G/H=34-160, A/B/C/D/E/F/G/H=262-574"/>
</dbReference>
<dbReference type="PDB" id="7FSD">
    <property type="method" value="X-ray"/>
    <property type="resolution" value="1.77 A"/>
    <property type="chains" value="A/B/C/D/E/F/G/H=34-160, A/B/C/D/E/F/G/H=262-574"/>
</dbReference>
<dbReference type="PDB" id="7QDN">
    <property type="method" value="X-ray"/>
    <property type="resolution" value="1.70 A"/>
    <property type="chains" value="A/B/C/D/E/F/G/H=30-574"/>
</dbReference>
<dbReference type="PDB" id="7QZU">
    <property type="method" value="X-ray"/>
    <property type="resolution" value="1.96 A"/>
    <property type="chains" value="A/B/C/D/E/F/G/H=30-574"/>
</dbReference>
<dbReference type="PDB" id="8TBS">
    <property type="method" value="X-ray"/>
    <property type="resolution" value="2.35 A"/>
    <property type="chains" value="A/B/C/D/E/F/G/H=50-574"/>
</dbReference>
<dbReference type="PDB" id="8TBT">
    <property type="method" value="X-ray"/>
    <property type="resolution" value="2.34 A"/>
    <property type="chains" value="A/B/C/D=50-574"/>
</dbReference>
<dbReference type="PDB" id="8TBU">
    <property type="method" value="X-ray"/>
    <property type="resolution" value="2.35 A"/>
    <property type="chains" value="A/B/C/D/E/F/G/H=50-574"/>
</dbReference>
<dbReference type="PDB" id="8XFD">
    <property type="method" value="X-ray"/>
    <property type="resolution" value="2.10 A"/>
    <property type="chains" value="A/B/C/D=34-574"/>
</dbReference>
<dbReference type="PDBsum" id="2VGB"/>
<dbReference type="PDBsum" id="2VGF"/>
<dbReference type="PDBsum" id="2VGG"/>
<dbReference type="PDBsum" id="2VGI"/>
<dbReference type="PDBsum" id="4IMA"/>
<dbReference type="PDBsum" id="4IP7"/>
<dbReference type="PDBsum" id="5SC8"/>
<dbReference type="PDBsum" id="5SC9"/>
<dbReference type="PDBsum" id="5SCA"/>
<dbReference type="PDBsum" id="5SCB"/>
<dbReference type="PDBsum" id="5SCC"/>
<dbReference type="PDBsum" id="5SCD"/>
<dbReference type="PDBsum" id="5SCE"/>
<dbReference type="PDBsum" id="5SCF"/>
<dbReference type="PDBsum" id="5SCG"/>
<dbReference type="PDBsum" id="5SCH"/>
<dbReference type="PDBsum" id="5SCI"/>
<dbReference type="PDBsum" id="5SCJ"/>
<dbReference type="PDBsum" id="5SCK"/>
<dbReference type="PDBsum" id="5SCL"/>
<dbReference type="PDBsum" id="5SDT"/>
<dbReference type="PDBsum" id="6NN4"/>
<dbReference type="PDBsum" id="6NN5"/>
<dbReference type="PDBsum" id="6NN7"/>
<dbReference type="PDBsum" id="6NN8"/>
<dbReference type="PDBsum" id="7FRV"/>
<dbReference type="PDBsum" id="7FRW"/>
<dbReference type="PDBsum" id="7FRX"/>
<dbReference type="PDBsum" id="7FRY"/>
<dbReference type="PDBsum" id="7FRZ"/>
<dbReference type="PDBsum" id="7FS0"/>
<dbReference type="PDBsum" id="7FS1"/>
<dbReference type="PDBsum" id="7FS2"/>
<dbReference type="PDBsum" id="7FS3"/>
<dbReference type="PDBsum" id="7FS4"/>
<dbReference type="PDBsum" id="7FS5"/>
<dbReference type="PDBsum" id="7FS6"/>
<dbReference type="PDBsum" id="7FS7"/>
<dbReference type="PDBsum" id="7FS8"/>
<dbReference type="PDBsum" id="7FS9"/>
<dbReference type="PDBsum" id="7FSA"/>
<dbReference type="PDBsum" id="7FSB"/>
<dbReference type="PDBsum" id="7FSC"/>
<dbReference type="PDBsum" id="7FSD"/>
<dbReference type="PDBsum" id="7QDN"/>
<dbReference type="PDBsum" id="7QZU"/>
<dbReference type="PDBsum" id="8TBS"/>
<dbReference type="PDBsum" id="8TBT"/>
<dbReference type="PDBsum" id="8TBU"/>
<dbReference type="PDBsum" id="8XFD"/>
<dbReference type="SMR" id="P30613"/>
<dbReference type="BioGRID" id="111330">
    <property type="interactions" value="63"/>
</dbReference>
<dbReference type="ComplexPortal" id="CPX-3094">
    <molecule id="P30613-2"/>
    <property type="entry name" value="PKL pyruvate kinase complex"/>
</dbReference>
<dbReference type="ComplexPortal" id="CPX-3095">
    <molecule id="P30613-1"/>
    <property type="entry name" value="PKR pyruvate kinase complex"/>
</dbReference>
<dbReference type="CORUM" id="P30613"/>
<dbReference type="FunCoup" id="P30613">
    <property type="interactions" value="592"/>
</dbReference>
<dbReference type="IntAct" id="P30613">
    <property type="interactions" value="28"/>
</dbReference>
<dbReference type="STRING" id="9606.ENSP00000339933"/>
<dbReference type="BindingDB" id="P30613"/>
<dbReference type="ChEMBL" id="CHEMBL1075126"/>
<dbReference type="DrugBank" id="DB02726">
    <property type="generic name" value="2-Phosphoglycolic Acid"/>
</dbReference>
<dbReference type="DrugBank" id="DB00787">
    <property type="generic name" value="Acyclovir"/>
</dbReference>
<dbReference type="DrugBank" id="DB04551">
    <property type="generic name" value="beta-D-fructofuranose 1,6-bisphosphate"/>
</dbReference>
<dbReference type="DrugBank" id="DB16236">
    <property type="generic name" value="Mitapivat"/>
</dbReference>
<dbReference type="DrugBank" id="DB00119">
    <property type="generic name" value="Pyruvic acid"/>
</dbReference>
<dbReference type="DrugCentral" id="P30613"/>
<dbReference type="GuidetoPHARMACOLOGY" id="3007"/>
<dbReference type="GlyGen" id="P30613">
    <property type="glycosylation" value="2 sites, 1 O-linked glycan (1 site)"/>
</dbReference>
<dbReference type="iPTMnet" id="P30613"/>
<dbReference type="PhosphoSitePlus" id="P30613"/>
<dbReference type="SwissPalm" id="P30613"/>
<dbReference type="BioMuta" id="PKLR"/>
<dbReference type="REPRODUCTION-2DPAGE" id="P30613"/>
<dbReference type="CPTAC" id="CPTAC-2748"/>
<dbReference type="jPOST" id="P30613"/>
<dbReference type="MassIVE" id="P30613"/>
<dbReference type="PaxDb" id="9606-ENSP00000339933"/>
<dbReference type="PeptideAtlas" id="P30613"/>
<dbReference type="ProteomicsDB" id="54725">
    <molecule id="P30613-1"/>
</dbReference>
<dbReference type="ProteomicsDB" id="54726">
    <molecule id="P30613-2"/>
</dbReference>
<dbReference type="Pumba" id="P30613"/>
<dbReference type="Antibodypedia" id="1670">
    <property type="antibodies" value="562 antibodies from 37 providers"/>
</dbReference>
<dbReference type="DNASU" id="5313"/>
<dbReference type="Ensembl" id="ENST00000342741.6">
    <molecule id="P30613-1"/>
    <property type="protein sequence ID" value="ENSP00000339933.4"/>
    <property type="gene ID" value="ENSG00000143627.19"/>
</dbReference>
<dbReference type="Ensembl" id="ENST00000392414.7">
    <molecule id="P30613-2"/>
    <property type="protein sequence ID" value="ENSP00000376214.3"/>
    <property type="gene ID" value="ENSG00000143627.19"/>
</dbReference>
<dbReference type="Ensembl" id="ENST00000571194.5">
    <molecule id="P30613-2"/>
    <property type="protein sequence ID" value="ENSP00000461487.1"/>
    <property type="gene ID" value="ENSG00000262785.5"/>
</dbReference>
<dbReference type="Ensembl" id="ENST00000572740.1">
    <molecule id="P30613-1"/>
    <property type="protein sequence ID" value="ENSP00000459921.1"/>
    <property type="gene ID" value="ENSG00000262785.5"/>
</dbReference>
<dbReference type="GeneID" id="5313"/>
<dbReference type="KEGG" id="hsa:5313"/>
<dbReference type="MANE-Select" id="ENST00000342741.6">
    <property type="protein sequence ID" value="ENSP00000339933.4"/>
    <property type="RefSeq nucleotide sequence ID" value="NM_000298.6"/>
    <property type="RefSeq protein sequence ID" value="NP_000289.1"/>
</dbReference>
<dbReference type="UCSC" id="uc001fka.5">
    <molecule id="P30613-1"/>
    <property type="organism name" value="human"/>
</dbReference>
<dbReference type="AGR" id="HGNC:9020"/>
<dbReference type="CTD" id="5313"/>
<dbReference type="DisGeNET" id="5313"/>
<dbReference type="GeneCards" id="PKLR"/>
<dbReference type="HGNC" id="HGNC:9020">
    <property type="gene designation" value="PKLR"/>
</dbReference>
<dbReference type="HPA" id="ENSG00000143627">
    <property type="expression patterns" value="Tissue enhanced (bone marrow, kidney, liver)"/>
</dbReference>
<dbReference type="MalaCards" id="PKLR"/>
<dbReference type="MIM" id="102900">
    <property type="type" value="phenotype"/>
</dbReference>
<dbReference type="MIM" id="266200">
    <property type="type" value="phenotype"/>
</dbReference>
<dbReference type="MIM" id="609712">
    <property type="type" value="gene"/>
</dbReference>
<dbReference type="neXtProt" id="NX_P30613"/>
<dbReference type="OpenTargets" id="ENSG00000143627"/>
<dbReference type="Orphanet" id="766">
    <property type="disease" value="Hemolytic anemia due to red cell pyruvate kinase deficiency"/>
</dbReference>
<dbReference type="PharmGKB" id="PA33352"/>
<dbReference type="VEuPathDB" id="HostDB:ENSG00000143627"/>
<dbReference type="eggNOG" id="KOG2323">
    <property type="taxonomic scope" value="Eukaryota"/>
</dbReference>
<dbReference type="GeneTree" id="ENSGT00390000008859"/>
<dbReference type="HOGENOM" id="CLU_015439_0_1_1"/>
<dbReference type="InParanoid" id="P30613"/>
<dbReference type="OMA" id="HQGRYDR"/>
<dbReference type="OrthoDB" id="108365at2759"/>
<dbReference type="PAN-GO" id="P30613">
    <property type="GO annotations" value="4 GO annotations based on evolutionary models"/>
</dbReference>
<dbReference type="PhylomeDB" id="P30613"/>
<dbReference type="TreeFam" id="TF300390"/>
<dbReference type="BioCyc" id="MetaCyc:HS07088-MONOMER"/>
<dbReference type="BRENDA" id="2.7.1.40">
    <property type="organism ID" value="2681"/>
</dbReference>
<dbReference type="PathwayCommons" id="P30613"/>
<dbReference type="Reactome" id="R-HSA-163765">
    <molecule id="P30613-1"/>
    <property type="pathway name" value="ChREBP activates metabolic gene expression"/>
</dbReference>
<dbReference type="Reactome" id="R-HSA-210745">
    <molecule id="P30613-2"/>
    <property type="pathway name" value="Regulation of gene expression in beta cells"/>
</dbReference>
<dbReference type="Reactome" id="R-HSA-70171">
    <property type="pathway name" value="Glycolysis"/>
</dbReference>
<dbReference type="Reactome" id="R-HSA-70268">
    <property type="pathway name" value="Pyruvate metabolism"/>
</dbReference>
<dbReference type="Reactome" id="R-HSA-9692914">
    <molecule id="P30613-2"/>
    <property type="pathway name" value="SARS-CoV-1-host interactions"/>
</dbReference>
<dbReference type="SABIO-RK" id="P30613"/>
<dbReference type="SignaLink" id="P30613"/>
<dbReference type="SIGNOR" id="P30613"/>
<dbReference type="UniPathway" id="UPA00109">
    <property type="reaction ID" value="UER00188"/>
</dbReference>
<dbReference type="BioGRID-ORCS" id="5313">
    <property type="hits" value="14 hits in 1158 CRISPR screens"/>
</dbReference>
<dbReference type="CD-CODE" id="91857CE7">
    <property type="entry name" value="Nucleolus"/>
</dbReference>
<dbReference type="EvolutionaryTrace" id="P30613"/>
<dbReference type="GeneWiki" id="PKLR"/>
<dbReference type="GenomeRNAi" id="5313"/>
<dbReference type="Pharos" id="P30613">
    <property type="development level" value="Tclin"/>
</dbReference>
<dbReference type="PRO" id="PR:P30613"/>
<dbReference type="Proteomes" id="UP000005640">
    <property type="component" value="Chromosome 1"/>
</dbReference>
<dbReference type="RNAct" id="P30613">
    <property type="molecule type" value="protein"/>
</dbReference>
<dbReference type="Bgee" id="ENSG00000143627">
    <property type="expression patterns" value="Expressed in liver and 53 other cell types or tissues"/>
</dbReference>
<dbReference type="ExpressionAtlas" id="P30613">
    <property type="expression patterns" value="baseline and differential"/>
</dbReference>
<dbReference type="GO" id="GO:0005737">
    <property type="term" value="C:cytoplasm"/>
    <property type="evidence" value="ECO:0000318"/>
    <property type="project" value="GO_Central"/>
</dbReference>
<dbReference type="GO" id="GO:0005829">
    <property type="term" value="C:cytosol"/>
    <property type="evidence" value="ECO:0000304"/>
    <property type="project" value="Reactome"/>
</dbReference>
<dbReference type="GO" id="GO:0070062">
    <property type="term" value="C:extracellular exosome"/>
    <property type="evidence" value="ECO:0007005"/>
    <property type="project" value="UniProtKB"/>
</dbReference>
<dbReference type="GO" id="GO:1902912">
    <property type="term" value="C:pyruvate kinase complex"/>
    <property type="evidence" value="ECO:0000314"/>
    <property type="project" value="ComplexPortal"/>
</dbReference>
<dbReference type="GO" id="GO:0005524">
    <property type="term" value="F:ATP binding"/>
    <property type="evidence" value="ECO:0007669"/>
    <property type="project" value="UniProtKB-KW"/>
</dbReference>
<dbReference type="GO" id="GO:0016301">
    <property type="term" value="F:kinase activity"/>
    <property type="evidence" value="ECO:0007669"/>
    <property type="project" value="UniProtKB-KW"/>
</dbReference>
<dbReference type="GO" id="GO:0000287">
    <property type="term" value="F:magnesium ion binding"/>
    <property type="evidence" value="ECO:0007669"/>
    <property type="project" value="InterPro"/>
</dbReference>
<dbReference type="GO" id="GO:0048029">
    <property type="term" value="F:monosaccharide binding"/>
    <property type="evidence" value="ECO:0007669"/>
    <property type="project" value="Ensembl"/>
</dbReference>
<dbReference type="GO" id="GO:0030955">
    <property type="term" value="F:potassium ion binding"/>
    <property type="evidence" value="ECO:0007669"/>
    <property type="project" value="InterPro"/>
</dbReference>
<dbReference type="GO" id="GO:0004743">
    <property type="term" value="F:pyruvate kinase activity"/>
    <property type="evidence" value="ECO:0000318"/>
    <property type="project" value="GO_Central"/>
</dbReference>
<dbReference type="GO" id="GO:0071872">
    <property type="term" value="P:cellular response to epinephrine stimulus"/>
    <property type="evidence" value="ECO:0007669"/>
    <property type="project" value="Ensembl"/>
</dbReference>
<dbReference type="GO" id="GO:0032869">
    <property type="term" value="P:cellular response to insulin stimulus"/>
    <property type="evidence" value="ECO:0000318"/>
    <property type="project" value="GO_Central"/>
</dbReference>
<dbReference type="GO" id="GO:0006096">
    <property type="term" value="P:glycolytic process"/>
    <property type="evidence" value="ECO:0000318"/>
    <property type="project" value="GO_Central"/>
</dbReference>
<dbReference type="GO" id="GO:0042866">
    <property type="term" value="P:pyruvate biosynthetic process"/>
    <property type="evidence" value="ECO:0007669"/>
    <property type="project" value="Ensembl"/>
</dbReference>
<dbReference type="GO" id="GO:0033198">
    <property type="term" value="P:response to ATP"/>
    <property type="evidence" value="ECO:0007669"/>
    <property type="project" value="Ensembl"/>
</dbReference>
<dbReference type="GO" id="GO:0051591">
    <property type="term" value="P:response to cAMP"/>
    <property type="evidence" value="ECO:0007669"/>
    <property type="project" value="Ensembl"/>
</dbReference>
<dbReference type="GO" id="GO:0009749">
    <property type="term" value="P:response to glucose"/>
    <property type="evidence" value="ECO:0007669"/>
    <property type="project" value="Ensembl"/>
</dbReference>
<dbReference type="GO" id="GO:0001666">
    <property type="term" value="P:response to hypoxia"/>
    <property type="evidence" value="ECO:0007669"/>
    <property type="project" value="Ensembl"/>
</dbReference>
<dbReference type="GO" id="GO:0010038">
    <property type="term" value="P:response to metal ion"/>
    <property type="evidence" value="ECO:0007669"/>
    <property type="project" value="Ensembl"/>
</dbReference>
<dbReference type="GO" id="GO:0007584">
    <property type="term" value="P:response to nutrient"/>
    <property type="evidence" value="ECO:0007669"/>
    <property type="project" value="Ensembl"/>
</dbReference>
<dbReference type="CDD" id="cd00288">
    <property type="entry name" value="Pyruvate_Kinase"/>
    <property type="match status" value="1"/>
</dbReference>
<dbReference type="FunFam" id="3.20.20.60:FF:000025">
    <property type="entry name" value="Pyruvate kinase"/>
    <property type="match status" value="1"/>
</dbReference>
<dbReference type="FunFam" id="3.40.1380.20:FF:000001">
    <property type="entry name" value="Pyruvate kinase"/>
    <property type="match status" value="1"/>
</dbReference>
<dbReference type="FunFam" id="2.40.33.10:FF:000023">
    <property type="entry name" value="Pyruvate kinase PKM"/>
    <property type="match status" value="1"/>
</dbReference>
<dbReference type="Gene3D" id="3.20.20.60">
    <property type="entry name" value="Phosphoenolpyruvate-binding domains"/>
    <property type="match status" value="1"/>
</dbReference>
<dbReference type="Gene3D" id="2.40.33.10">
    <property type="entry name" value="PK beta-barrel domain-like"/>
    <property type="match status" value="1"/>
</dbReference>
<dbReference type="Gene3D" id="3.40.1380.20">
    <property type="entry name" value="Pyruvate kinase, C-terminal domain"/>
    <property type="match status" value="1"/>
</dbReference>
<dbReference type="InterPro" id="IPR001697">
    <property type="entry name" value="Pyr_Knase"/>
</dbReference>
<dbReference type="InterPro" id="IPR015813">
    <property type="entry name" value="Pyrv/PenolPyrv_kinase-like_dom"/>
</dbReference>
<dbReference type="InterPro" id="IPR040442">
    <property type="entry name" value="Pyrv_kinase-like_dom_sf"/>
</dbReference>
<dbReference type="InterPro" id="IPR011037">
    <property type="entry name" value="Pyrv_Knase-like_insert_dom_sf"/>
</dbReference>
<dbReference type="InterPro" id="IPR018209">
    <property type="entry name" value="Pyrv_Knase_AS"/>
</dbReference>
<dbReference type="InterPro" id="IPR015793">
    <property type="entry name" value="Pyrv_Knase_brl"/>
</dbReference>
<dbReference type="InterPro" id="IPR015795">
    <property type="entry name" value="Pyrv_Knase_C"/>
</dbReference>
<dbReference type="InterPro" id="IPR036918">
    <property type="entry name" value="Pyrv_Knase_C_sf"/>
</dbReference>
<dbReference type="InterPro" id="IPR015806">
    <property type="entry name" value="Pyrv_Knase_insert_dom_sf"/>
</dbReference>
<dbReference type="NCBIfam" id="NF004491">
    <property type="entry name" value="PRK05826.1"/>
    <property type="match status" value="1"/>
</dbReference>
<dbReference type="NCBIfam" id="NF004978">
    <property type="entry name" value="PRK06354.1"/>
    <property type="match status" value="1"/>
</dbReference>
<dbReference type="NCBIfam" id="TIGR01064">
    <property type="entry name" value="pyruv_kin"/>
    <property type="match status" value="1"/>
</dbReference>
<dbReference type="PANTHER" id="PTHR11817">
    <property type="entry name" value="PYRUVATE KINASE"/>
    <property type="match status" value="1"/>
</dbReference>
<dbReference type="Pfam" id="PF00224">
    <property type="entry name" value="PK"/>
    <property type="match status" value="1"/>
</dbReference>
<dbReference type="Pfam" id="PF02887">
    <property type="entry name" value="PK_C"/>
    <property type="match status" value="1"/>
</dbReference>
<dbReference type="PRINTS" id="PR01050">
    <property type="entry name" value="PYRUVTKNASE"/>
</dbReference>
<dbReference type="SUPFAM" id="SSF51621">
    <property type="entry name" value="Phosphoenolpyruvate/pyruvate domain"/>
    <property type="match status" value="1"/>
</dbReference>
<dbReference type="SUPFAM" id="SSF50800">
    <property type="entry name" value="PK beta-barrel domain-like"/>
    <property type="match status" value="1"/>
</dbReference>
<dbReference type="SUPFAM" id="SSF52935">
    <property type="entry name" value="PK C-terminal domain-like"/>
    <property type="match status" value="1"/>
</dbReference>
<dbReference type="PROSITE" id="PS00110">
    <property type="entry name" value="PYRUVATE_KINASE"/>
    <property type="match status" value="1"/>
</dbReference>
<proteinExistence type="evidence at protein level"/>
<comment type="function">
    <text evidence="6">Pyruvate kinase that catalyzes the conversion of phosphoenolpyruvate to pyruvate with the synthesis of ATP, and which plays a key role in glycolysis.</text>
</comment>
<comment type="catalytic activity">
    <reaction evidence="6">
        <text>pyruvate + ATP = phosphoenolpyruvate + ADP + H(+)</text>
        <dbReference type="Rhea" id="RHEA:18157"/>
        <dbReference type="ChEBI" id="CHEBI:15361"/>
        <dbReference type="ChEBI" id="CHEBI:15378"/>
        <dbReference type="ChEBI" id="CHEBI:30616"/>
        <dbReference type="ChEBI" id="CHEBI:58702"/>
        <dbReference type="ChEBI" id="CHEBI:456216"/>
        <dbReference type="EC" id="2.7.1.40"/>
    </reaction>
    <physiologicalReaction direction="right-to-left" evidence="6">
        <dbReference type="Rhea" id="RHEA:18159"/>
    </physiologicalReaction>
</comment>
<comment type="cofactor">
    <cofactor evidence="28">
        <name>Mg(2+)</name>
        <dbReference type="ChEBI" id="CHEBI:18420"/>
    </cofactor>
    <cofactor evidence="6">
        <name>Mn(2+)</name>
        <dbReference type="ChEBI" id="CHEBI:29035"/>
    </cofactor>
</comment>
<comment type="cofactor">
    <cofactor evidence="28">
        <name>K(+)</name>
        <dbReference type="ChEBI" id="CHEBI:29103"/>
    </cofactor>
</comment>
<comment type="activity regulation">
    <text evidence="6">Allosterically activated by fructose 1,6-bisphosphate.</text>
</comment>
<comment type="pathway">
    <text evidence="6">Carbohydrate degradation; glycolysis; pyruvate from D-glyceraldehyde 3-phosphate: step 5/5.</text>
</comment>
<comment type="subunit">
    <text evidence="6">Homotetramer.</text>
</comment>
<comment type="interaction">
    <interactant intactId="EBI-2117450">
        <id>P30613</id>
    </interactant>
    <interactant intactId="EBI-12012272">
        <id>Q9UBL6-2</id>
        <label>CPNE7</label>
    </interactant>
    <organismsDiffer>false</organismsDiffer>
    <experiments>3</experiments>
</comment>
<comment type="alternative products">
    <event type="alternative splicing"/>
    <isoform>
        <id>P30613-1</id>
        <name>R-type</name>
        <name>PKR</name>
        <sequence type="displayed"/>
    </isoform>
    <isoform>
        <id>P30613-2</id>
        <name>L-type</name>
        <name>PKL</name>
        <sequence type="described" ref="VSP_002883"/>
    </isoform>
</comment>
<comment type="disease" evidence="21">
    <disease id="DI-02241">
        <name>Pyruvate kinase hyperactivity</name>
        <acronym>PKHYP</acronym>
        <description>Autosomal dominant phenotype characterized by increase of red blood cell ATP.</description>
        <dbReference type="MIM" id="102900"/>
    </disease>
    <text>The disease is caused by variants affecting the gene represented in this entry.</text>
</comment>
<comment type="disease" evidence="3 4 5 6 7 8 9 10 11 12 13 14 15 16 17 18 19 20 22 23 24 25">
    <disease id="DI-00965">
        <name>Anemia, congenital, non-spherocytic hemolytic, 2</name>
        <acronym>CNSHA2</acronym>
        <description>An autosomal recessive disorder characterized by a variable degree of chronic hemolysis and decreased red cell pyruvate kinase activity. Clinical manifestations range from fatal anemia at birth to a fully compensated hemolysis without apparent anemia.</description>
        <dbReference type="MIM" id="266200"/>
    </disease>
    <text>The disease is caused by variants affecting the gene represented in this entry.</text>
</comment>
<comment type="miscellaneous">
    <text>There are 4 isozymes of pyruvate kinase in mammals: L, R, M1 and M2. L type is major isozyme in the liver, R is found in red cells, M1 is the main form in muscle, heart and brain, and M2 is found in early fetal tissues.</text>
</comment>
<comment type="similarity">
    <text evidence="27">Belongs to the pyruvate kinase family.</text>
</comment>
<comment type="sequence caution" evidence="27">
    <conflict type="erroneous gene model prediction">
        <sequence resource="EMBL-CDS" id="BAA02515"/>
    </conflict>
</comment>
<comment type="online information" name="Wikipedia">
    <link uri="https://en.wikipedia.org/wiki/Pyruvate_kinase"/>
    <text>Pyruvate kinase entry</text>
</comment>
<gene>
    <name type="primary">PKLR</name>
    <name type="synonym">PK1</name>
    <name type="synonym">PKL</name>
</gene>
<accession>P30613</accession>
<accession>O75758</accession>
<accession>P11973</accession>
<organism>
    <name type="scientific">Homo sapiens</name>
    <name type="common">Human</name>
    <dbReference type="NCBI Taxonomy" id="9606"/>
    <lineage>
        <taxon>Eukaryota</taxon>
        <taxon>Metazoa</taxon>
        <taxon>Chordata</taxon>
        <taxon>Craniata</taxon>
        <taxon>Vertebrata</taxon>
        <taxon>Euteleostomi</taxon>
        <taxon>Mammalia</taxon>
        <taxon>Eutheria</taxon>
        <taxon>Euarchontoglires</taxon>
        <taxon>Primates</taxon>
        <taxon>Haplorrhini</taxon>
        <taxon>Catarrhini</taxon>
        <taxon>Hominidae</taxon>
        <taxon>Homo</taxon>
    </lineage>
</organism>
<reference key="1">
    <citation type="journal article" date="1991" name="Proc. Natl. Acad. Sci. U.S.A.">
        <title>cDNA cloning of human R-type pyruvate kinase and identification of a single amino acid substitution (Thr384--&gt;Met) affecting enzymatic stability in a pyruvate kinase variant (PK Tokyo) associated with hereditary hemolytic anemia.</title>
        <authorList>
            <person name="Kanno H."/>
            <person name="Fujii H."/>
            <person name="Hirono A."/>
            <person name="Miwa S."/>
        </authorList>
    </citation>
    <scope>NUCLEOTIDE SEQUENCE [MRNA]</scope>
    <scope>VARIANT CNSHA2 MET-384</scope>
</reference>
<reference key="2">
    <citation type="journal article" date="1988" name="Proc. Natl. Acad. Sci. U.S.A.">
        <title>Human liver type pyruvate kinase: complete amino acid sequence and the expression in mammalian cells.</title>
        <authorList>
            <person name="Tani K."/>
            <person name="Fujii H."/>
            <person name="Nagata S."/>
            <person name="Miwa S."/>
        </authorList>
    </citation>
    <scope>NUCLEOTIDE SEQUENCE [MRNA]</scope>
</reference>
<reference key="3">
    <citation type="submission" date="1998-07" db="EMBL/GenBank/DDBJ databases">
        <authorList>
            <person name="Kanno H."/>
        </authorList>
    </citation>
    <scope>SEQUENCE REVISION TO 130 AND 232</scope>
</reference>
<reference key="4">
    <citation type="journal article" date="1992" name="Biochem. Biophys. Res. Commun.">
        <title>Structural analysis of human pyruvate kinase L-gene and identification of the promoter activity in erythroid cells.</title>
        <authorList>
            <person name="Kanno H."/>
            <person name="Fujii H."/>
            <person name="Miwa S."/>
        </authorList>
    </citation>
    <scope>NUCLEOTIDE SEQUENCE [GENOMIC DNA]</scope>
</reference>
<reference key="5">
    <citation type="submission" date="2003-06" db="EMBL/GenBank/DDBJ databases">
        <authorList>
            <consortium name="NIEHS SNPs program"/>
        </authorList>
    </citation>
    <scope>NUCLEOTIDE SEQUENCE [GENOMIC DNA]</scope>
    <scope>VARIANT ILE-506</scope>
</reference>
<reference key="6">
    <citation type="journal article" date="2004" name="Genome Res.">
        <title>The status, quality, and expansion of the NIH full-length cDNA project: the Mammalian Gene Collection (MGC).</title>
        <authorList>
            <consortium name="The MGC Project Team"/>
        </authorList>
    </citation>
    <scope>NUCLEOTIDE SEQUENCE [LARGE SCALE MRNA] (ISOFORM R-TYPE)</scope>
    <source>
        <tissue>Pancreas</tissue>
    </source>
</reference>
<reference key="7">
    <citation type="journal article" date="1987" name="Biochem. Biophys. Res. Commun.">
        <title>Human liver type pyruvate kinase: cDNA cloning and chromosomal assignment.</title>
        <authorList>
            <person name="Tani K."/>
            <person name="Fujii H."/>
            <person name="Tsutsumi H."/>
            <person name="Sukegawa J."/>
            <person name="Toyoshima K."/>
            <person name="Yoshida M.C."/>
            <person name="Noguchi T."/>
            <person name="Tanaka T."/>
            <person name="Miwa S."/>
        </authorList>
    </citation>
    <scope>NUCLEOTIDE SEQUENCE [MRNA] OF 470-574</scope>
</reference>
<reference key="8">
    <citation type="journal article" date="1993" name="Biochem. Biophys. Res. Commun.">
        <title>Molecular basis of impaired pyruvate kinase isozyme conversion in erythroid cells: a single amino acid substitution near the active site and decreased mRNA content of the R-type PK.</title>
        <authorList>
            <person name="Kanno H."/>
            <person name="Fujii H."/>
            <person name="Tsujino G."/>
            <person name="Miwa S."/>
        </authorList>
    </citation>
    <scope>NUCLEOTIDE SEQUENCE [MRNA] OF 365-431</scope>
    <scope>VARIANT CNSHA2 PHE-368</scope>
</reference>
<reference key="9">
    <citation type="journal article" date="1996" name="Hum. Mutat.">
        <title>Mutations in pyruvate kinase.</title>
        <authorList>
            <person name="Beutler E."/>
            <person name="Baronciani L."/>
        </authorList>
    </citation>
    <scope>REVIEW</scope>
    <scope>VARIANTS CNSHA2 THR-107; ARG-275; ASN-281; VAL-287; THR-314; CYS-359; TRP-426; VAL-459; VAL-468; TRP-490; MET-552; GLY-559 AND LYS-566</scope>
</reference>
<reference key="10">
    <citation type="journal article" date="1996" name="Blood Cells Mol. Dis.">
        <title>Hematologically important mutations: red cell pyruvate kinase.</title>
        <authorList>
            <person name="Baronciani L."/>
            <person name="Bianchi P."/>
            <person name="Zanella A."/>
        </authorList>
    </citation>
    <scope>REVIEW</scope>
    <scope>VARIANTS CNSHA2 PRO-80; ILE-131 DEL; ASP-221 INS AND ASN-281</scope>
</reference>
<reference key="11">
    <citation type="journal article" date="1996" name="Blood Cells Mol. Dis.">
        <title>Hematologically important mutations: red cell pyruvate kinase (1st update).</title>
        <authorList>
            <person name="Baronciani L."/>
            <person name="Bianchi P."/>
            <person name="Zanella A."/>
        </authorList>
    </citation>
    <scope>REVIEW</scope>
    <scope>VARIANTS CNSHA2 PRO-115; PHE-120; ARG-263; TRP-263; ASN-331; PHE-342; ASP-352; ASP-427; PHE-485 AND THR-495</scope>
</reference>
<reference key="12">
    <citation type="journal article" date="1998" name="Blood Cells Mol. Dis.">
        <title>Hematologically important mutations: red cell pyruvate kinase (2nd update).</title>
        <authorList>
            <person name="Baronciani L."/>
            <person name="Bianchi P."/>
            <person name="Zanella A."/>
        </authorList>
    </citation>
    <scope>REVIEW</scope>
    <scope>VARIANTS CNSHA2 PRO-86; ARG-95; ALA-222; LEU-288; VAL-295; LYS-315; ASP-341; ASN-348; ILE-376; SER-401 INS; ALA-408; ALA-427; ALA-477; GLN-488; ARG-511 AND CYS-531</scope>
</reference>
<reference key="13">
    <citation type="journal article" date="2000" name="Blood Cells Mol. Dis.">
        <title>Hematologically important mutations: red cell pyruvate kinase (third update).</title>
        <authorList>
            <person name="Bianchi P."/>
            <person name="Zanella A."/>
        </authorList>
    </citation>
    <scope>REVIEW</scope>
    <scope>VARIANTS CNSHA2 THR-153; VAL-159; ASN-293; ASP-352; TRP-385; GLY-468 AND ALA-557</scope>
</reference>
<reference key="14">
    <citation type="journal article" date="2013" name="J. Proteome Res.">
        <title>Toward a comprehensive characterization of a human cancer cell phosphoproteome.</title>
        <authorList>
            <person name="Zhou H."/>
            <person name="Di Palma S."/>
            <person name="Preisinger C."/>
            <person name="Peng M."/>
            <person name="Polat A.N."/>
            <person name="Heck A.J."/>
            <person name="Mohammed S."/>
        </authorList>
    </citation>
    <scope>PHOSPHORYLATION [LARGE SCALE ANALYSIS] AT SER-2; SER-19 AND SER-26</scope>
    <scope>IDENTIFICATION BY MASS SPECTROMETRY [LARGE SCALE ANALYSIS]</scope>
    <source>
        <tissue>Erythroleukemia</tissue>
    </source>
</reference>
<reference key="15">
    <citation type="journal article" date="2014" name="J. Proteomics">
        <title>An enzyme assisted RP-RPLC approach for in-depth analysis of human liver phosphoproteome.</title>
        <authorList>
            <person name="Bian Y."/>
            <person name="Song C."/>
            <person name="Cheng K."/>
            <person name="Dong M."/>
            <person name="Wang F."/>
            <person name="Huang J."/>
            <person name="Sun D."/>
            <person name="Wang L."/>
            <person name="Ye M."/>
            <person name="Zou H."/>
        </authorList>
    </citation>
    <scope>PHOSPHORYLATION [LARGE SCALE ANALYSIS] AT SER-43 AND SER-292</scope>
    <scope>IDENTIFICATION BY MASS SPECTROMETRY [LARGE SCALE ANALYSIS]</scope>
    <source>
        <tissue>Liver</tissue>
    </source>
</reference>
<reference key="16">
    <citation type="journal article" date="2002" name="J. Biol. Chem.">
        <title>Structure and function of human erythrocyte pyruvate kinase. Molecular basis of nonspherocytic hemolytic anemia.</title>
        <authorList>
            <person name="Valentini G."/>
            <person name="Chiarelli L.R."/>
            <person name="Fortin R."/>
            <person name="Dolzan M."/>
            <person name="Galizzi A."/>
            <person name="Abraham D.J."/>
            <person name="Wang C."/>
            <person name="Bianchi P."/>
            <person name="Zanella A."/>
            <person name="Mattevi A."/>
        </authorList>
    </citation>
    <scope>X-RAY CRYSTALLOGRAPHY (2.73 ANGSTROMS) OF 47-574 IN COMPLEX WITH SUBSTRATE ANALOG; FRUCTOSE 1,6-BISPHOSPHATE; POTASSIUM IONS AND MANGANESE IONS</scope>
    <scope>FUNCTION</scope>
    <scope>CATALYTIC ACTIVITY</scope>
    <scope>ALLOSTERIC ACTIVATION</scope>
    <scope>ACTIVITY REGULATION</scope>
    <scope>CHARACTERIZATION OF VARIANTS CNSHA2 SER-332; ASP-364; ASN-390; HIS-479; TRP-486; LEU-504 AND TRP-532</scope>
    <scope>CHARACTERIZATION OF VARIANT MET-384</scope>
    <scope>SUBUNIT</scope>
</reference>
<reference key="17">
    <citation type="journal article" date="1991" name="Blood">
        <title>Point mutations in the L-type pyruvate kinase gene of two children with hemolytic anemia caused by pyruvate kinase deficiency.</title>
        <authorList>
            <person name="Neubauer B."/>
            <person name="Lakomek M."/>
            <person name="Winkler H."/>
            <person name="Parke M."/>
            <person name="Hofferbert S."/>
            <person name="Schroter W."/>
        </authorList>
    </citation>
    <scope>VARIANTS CNSHA2 CYS-163 AND MET-384</scope>
</reference>
<reference key="18">
    <citation type="journal article" date="1992" name="Blood">
        <title>Identical point mutations of the R-type pyruvate kinase (PK) cDNA found in unrelated PK variants associated with hereditary hemolytic anemia.</title>
        <authorList>
            <person name="Kanno H."/>
            <person name="Fujii H."/>
            <person name="Hirono A."/>
            <person name="Omine M."/>
            <person name="Miwa S."/>
        </authorList>
    </citation>
    <scope>VARIANT CNSHA2 LYS-421</scope>
</reference>
<reference key="19">
    <citation type="journal article" date="1993" name="Blood">
        <title>Low substrate affinity of pyruvate kinase variant (PK Sapporo) caused by a single amino acid substitution (426 Arg--&gt;Gln) associated with hereditary hemolytic anemia.</title>
        <authorList>
            <person name="Kanno H."/>
            <person name="Fujii H."/>
            <person name="Miwa S."/>
        </authorList>
    </citation>
    <scope>VARIANT CNSHA2 GLN-426</scope>
</reference>
<reference key="20">
    <citation type="journal article" date="1993" name="Proc. Natl. Acad. Sci. U.S.A.">
        <title>Analysis of pyruvate kinase-deficiency mutations that produce nonspherocytic hemolytic anemia.</title>
        <authorList>
            <person name="Baronciani L."/>
            <person name="Beutler E."/>
        </authorList>
    </citation>
    <scope>VARIANTS CNSHA2 ASP-134; PRO-155; HIS-359; TRP-486; VAL-495 AND GLN-510</scope>
</reference>
<reference key="21">
    <citation type="journal article" date="1994" name="Blood">
        <title>Molecular abnormality of erythrocyte pyruvate kinase deficiency in the Amish.</title>
        <authorList>
            <person name="Kanno H."/>
            <person name="Ballas S.K."/>
            <person name="Miwa S."/>
            <person name="Fujii H."/>
            <person name="Bowman H.S."/>
        </authorList>
    </citation>
    <scope>VARIANT CNSHA2 HIS-479</scope>
</reference>
<reference key="22">
    <citation type="journal article" date="1994" name="Blood">
        <title>Mutations in the pyruvate kinase L gene in patients with hereditary hemolytic anemia.</title>
        <authorList>
            <person name="Lenzner C."/>
            <person name="Nuernberg P."/>
            <person name="Thiele B.-J."/>
            <person name="Reis A."/>
            <person name="Brabec V."/>
            <person name="Sakalova A."/>
            <person name="Jacobasch G."/>
        </authorList>
    </citation>
    <scope>VARIANTS CNSHA2 SER-332; SER-336; LYS-354 DEL; ASP-361; THR-392; HIS-498; GLN-510 AND TRP-532</scope>
</reference>
<reference key="23">
    <citation type="journal article" date="1995" name="J. Clin. Invest.">
        <title>Molecular study of pyruvate kinase deficient patients with hereditary nonspherocytic hemolytic anemia.</title>
        <authorList>
            <person name="Baronciani L."/>
            <person name="Beutler E."/>
        </authorList>
    </citation>
    <scope>VARIANTS CNSHA2 GLU-331; ALA-341; LYS-393; SER-393; ASP-458; MET-460 AND HIS-498</scope>
</reference>
<reference key="24">
    <citation type="journal article" date="1995" name="J. Invest. Med.">
        <title>Study of the molecular defects in pyruvate kinase (PK) deficient patients affected by hereditary nonspherocytic hemolytic anemia (HNHA).</title>
        <authorList>
            <person name="Baronciani L."/>
            <person name="Westwood B."/>
            <person name="Beutler E."/>
        </authorList>
    </citation>
    <scope>VARIANTS CNSHA2</scope>
</reference>
<reference key="25">
    <citation type="journal article" date="1997" name="Hum. Mutat.">
        <title>G-to-T transition at cDNA nt 110 (K37Q) in the PKLR (pyruvate kinase) gene is the molecular basis of a case of hereditary increase of red blood cell ATP.</title>
        <authorList>
            <person name="Beutler E."/>
            <person name="Westwood B."/>
            <person name="van Zwieten R."/>
            <person name="Roos D."/>
        </authorList>
    </citation>
    <scope>VARIANT PKHYP GLU-37</scope>
</reference>
<reference key="26">
    <citation type="journal article" date="1998" name="Br. J. Haematol.">
        <title>Molecular characterization of the PK-LR gene in pyruvate kinase deficient Spanish patients.</title>
        <authorList>
            <person name="Zarza R."/>
            <person name="Alvarez R."/>
            <person name="Pujades A."/>
            <person name="Nomdedeu B."/>
            <person name="Carrera A."/>
            <person name="Estella J."/>
            <person name="Remacha A."/>
            <person name="Sanchez J.M."/>
            <person name="Morey M."/>
            <person name="Cortes T."/>
            <person name="Perez Lungmus G."/>
            <person name="Bureo E."/>
            <person name="Vives Corrons J.L."/>
        </authorList>
    </citation>
    <scope>VARIANTS CNSHA2 GLN-172; GLN-337; HIS-339; THR-357; ILE-408; THR-431; TRP-486 AND GLN-532</scope>
</reference>
<reference key="27">
    <citation type="journal article" date="1998" name="Br. J. Haematol.">
        <title>A new sickle cell disease phenotype associating Hb S trait, severe pyruvate kinase deficiency (PK Conakry), and an alpha-2 globin gene variant (Hb Conakry).</title>
        <authorList>
            <person name="Cohen-Solal M."/>
            <person name="Prehu C."/>
            <person name="Wajcman H."/>
            <person name="Poyart C."/>
            <person name="Bardakdjian-Michau J."/>
            <person name="Kister J."/>
            <person name="Prome D."/>
            <person name="Valentin C."/>
            <person name="Bachir D."/>
            <person name="Galacteros F."/>
        </authorList>
    </citation>
    <scope>VARIANT CNSHA2 TYR-130</scope>
</reference>
<reference key="28">
    <citation type="journal article" date="1998" name="Hum. Mutat.">
        <title>Novel mutations and structural implications in R-type pyruvate kinase-deficient patients from Southern Italy.</title>
        <authorList>
            <person name="Pastore L."/>
            <person name="della Morte R."/>
            <person name="Frisso G."/>
            <person name="Alfinito F."/>
            <person name="Vitale D."/>
            <person name="Calise R.M."/>
            <person name="Ferraro F."/>
            <person name="Zagari A."/>
            <person name="Rotoli B."/>
            <person name="Salvatore F."/>
        </authorList>
    </citation>
    <scope>VARIANTS CNSHA2 SER-332; PRO-337; TRP-486; CYS-498 AND GLN-510</scope>
</reference>
<reference key="29">
    <citation type="journal article" date="2001" name="Br. J. Haematol.">
        <title>Molecular characterization of the PK-LR gene in sixteen pyruvate kinase-deficient patients.</title>
        <authorList>
            <person name="Zanella A."/>
            <person name="Bianchi P."/>
            <person name="Fermo E."/>
            <person name="Iurlo A."/>
            <person name="Zappa M."/>
            <person name="Vercellati C."/>
            <person name="Boschetti C."/>
            <person name="Baronciani L."/>
            <person name="Cotton F."/>
        </authorList>
    </citation>
    <scope>VARIANTS CNSHA2 MET-335; LYS-348 DEL; GLY-387; ASP-394 AND VAL-394</scope>
</reference>
<reference key="30">
    <citation type="journal article" date="2009" name="Hum. Mutat.">
        <title>Fifteen novel mutations in PKLR associated with pyruvate kinase (PK) deficiency: structural implications of amino acid substitutions in PK.</title>
        <authorList>
            <person name="van Wijk R."/>
            <person name="Huizinga E.G."/>
            <person name="van Wesel A.C.W."/>
            <person name="van Oirschot B.A."/>
            <person name="Hadders M.A."/>
            <person name="van Solinge W.W."/>
        </authorList>
    </citation>
    <scope>VARIANTS CNSHA2 TRP-40; 48-THR--THR-53 DEL; PRO-73; ASN-90; ARG-111; THR-154; LEU-163; VAL-165; VAL-272; ASN-310; LEU-320; GLU-358 AND PRO-374</scope>
</reference>
<reference key="31">
    <citation type="journal article" date="2011" name="Discov. Med.">
        <title>Exome sequencing and unrelated findings in the context of complex disease research: ethical and clinical implications.</title>
        <authorList>
            <person name="Lyon G.J."/>
            <person name="Jiang T."/>
            <person name="Van Wijk R."/>
            <person name="Wang W."/>
            <person name="Bodily P.M."/>
            <person name="Xing J."/>
            <person name="Tian L."/>
            <person name="Robison R.J."/>
            <person name="Clement M."/>
            <person name="Lin Y."/>
            <person name="Zhang P."/>
            <person name="Liu Y."/>
            <person name="Moore B."/>
            <person name="Glessner J.T."/>
            <person name="Elia J."/>
            <person name="Reimherr F."/>
            <person name="van Solinge W.W."/>
            <person name="Yandell M."/>
            <person name="Hakonarson H."/>
            <person name="Wang J."/>
            <person name="Johnson W.E."/>
            <person name="Wei Z."/>
            <person name="Wang K."/>
        </authorList>
    </citation>
    <scope>VARIANTS CNSHA2 ALA-341 AND GLN-569</scope>
</reference>